<name>KDM4D_HUMAN</name>
<sequence>METMKSKANCAQNPNCNIMIFHPTKEEFNDFDKYIAYMESQGAHRAGLAKIIPPKEWKARETYDNISEILIATPLQQVASGRAGVFTQYHKKKKAMTVGEYRHLANSKKYQTPPHQNFEDLERKYWKNRIYNSPIYGADISGSLFDENTKQWNLGHLGTIQDLLEKECGVVIEGVNTPYLYFGMWKTTFAWHTEDMDLYSINYLHLGEPKTWYVVPPEHGQRLERLARELFPGSSRGCGAFLRHKVALISPTVLKENGIPFNRITQEAGEFMVTFPYGYHAGFNHGFNCAEAINFATPRWIDYGKMASQCSCGEARVTFSMDAFVRILQPERYDLWKRGQDRAVVDHMEPRVPASQELSTQKEVQLPRRAALGLRQLPSHWARHSPWPMAARSGTRCHTLVCSSLPRRSAVSGTATQPRAAAVHSSKKPSSTPSSTPGPSAQIIHPSNGRRGRGRPPQKLRAQELTLQTPAKRPLLAGTTCTASGPEPEPLPEDGALMDKPVPLSPGLQHPVKASGCSWAPVP</sequence>
<proteinExistence type="evidence at protein level"/>
<evidence type="ECO:0000250" key="1"/>
<evidence type="ECO:0000250" key="2">
    <source>
        <dbReference type="UniProtKB" id="B2RXH2"/>
    </source>
</evidence>
<evidence type="ECO:0000255" key="3">
    <source>
        <dbReference type="PROSITE-ProRule" id="PRU00537"/>
    </source>
</evidence>
<evidence type="ECO:0000255" key="4">
    <source>
        <dbReference type="PROSITE-ProRule" id="PRU00538"/>
    </source>
</evidence>
<evidence type="ECO:0000256" key="5">
    <source>
        <dbReference type="SAM" id="MobiDB-lite"/>
    </source>
</evidence>
<evidence type="ECO:0000269" key="6">
    <source>
    </source>
</evidence>
<evidence type="ECO:0000269" key="7">
    <source>
    </source>
</evidence>
<evidence type="ECO:0000269" key="8">
    <source>
    </source>
</evidence>
<evidence type="ECO:0000269" key="9">
    <source>
    </source>
</evidence>
<evidence type="ECO:0000269" key="10">
    <source>
    </source>
</evidence>
<evidence type="ECO:0000305" key="11"/>
<evidence type="ECO:0000305" key="12">
    <source>
    </source>
</evidence>
<evidence type="ECO:0007744" key="13">
    <source>
        <dbReference type="PDB" id="5F5A"/>
    </source>
</evidence>
<evidence type="ECO:0007744" key="14">
    <source>
        <dbReference type="PDB" id="5F5C"/>
    </source>
</evidence>
<evidence type="ECO:0007829" key="15">
    <source>
        <dbReference type="PDB" id="4HON"/>
    </source>
</evidence>
<evidence type="ECO:0007829" key="16">
    <source>
        <dbReference type="PDB" id="5PIW"/>
    </source>
</evidence>
<evidence type="ECO:0007829" key="17">
    <source>
        <dbReference type="PDB" id="5PK6"/>
    </source>
</evidence>
<evidence type="ECO:0007829" key="18">
    <source>
        <dbReference type="PDB" id="6H10"/>
    </source>
</evidence>
<comment type="function">
    <text evidence="8 10">Histone demethylase that specifically demethylates 'Lys-9' of histone H3, thereby playing a central role in histone code. Does not demethylate histone H3 'Lys-4', H3 'Lys-27', H3 'Lys-36' nor H4 'Lys-20'. Demethylates both di- and trimethylated H3 'Lys-9' residue, while it has no activity on monomethylated residues. Demethylation of Lys residue generates formaldehyde and succinate.</text>
</comment>
<comment type="catalytic activity">
    <reaction evidence="8">
        <text>N(6),N(6),N(6)-trimethyl-L-lysyl(9)-[histone H3] + 2 2-oxoglutarate + 2 O2 = N(6)-methyl-L-lysyl(9)-[histone H3] + 2 formaldehyde + 2 succinate + 2 CO2</text>
        <dbReference type="Rhea" id="RHEA:60200"/>
        <dbReference type="Rhea" id="RHEA-COMP:15538"/>
        <dbReference type="Rhea" id="RHEA-COMP:15542"/>
        <dbReference type="ChEBI" id="CHEBI:15379"/>
        <dbReference type="ChEBI" id="CHEBI:16526"/>
        <dbReference type="ChEBI" id="CHEBI:16810"/>
        <dbReference type="ChEBI" id="CHEBI:16842"/>
        <dbReference type="ChEBI" id="CHEBI:30031"/>
        <dbReference type="ChEBI" id="CHEBI:61929"/>
        <dbReference type="ChEBI" id="CHEBI:61961"/>
        <dbReference type="EC" id="1.14.11.66"/>
    </reaction>
</comment>
<comment type="cofactor">
    <cofactor evidence="1">
        <name>Fe(2+)</name>
        <dbReference type="ChEBI" id="CHEBI:29033"/>
    </cofactor>
    <text evidence="1">Binds 1 Fe(2+) ion per subunit.</text>
</comment>
<comment type="interaction">
    <interactant intactId="EBI-4311651">
        <id>Q6B0I6</id>
    </interactant>
    <interactant intactId="EBI-742887">
        <id>Q8TAP6</id>
        <label>CEP76</label>
    </interactant>
    <organismsDiffer>false</organismsDiffer>
    <experiments>3</experiments>
</comment>
<comment type="subcellular location">
    <subcellularLocation>
        <location evidence="3 10">Nucleus</location>
    </subcellularLocation>
</comment>
<comment type="PTM">
    <text evidence="10">Ubiquitinated via 'Lys-63'-linked ubiquitin chains. Deubiquitinated by USP14 with the help of TRIM14 leading to stabilization.</text>
</comment>
<comment type="similarity">
    <text evidence="11">Belongs to the JHDM3 histone demethylase family.</text>
</comment>
<comment type="caution">
    <text evidence="11">It is uncertain whether Met-1 or Met-4 is the initiator.</text>
</comment>
<comment type="sequence caution" evidence="11">
    <conflict type="erroneous initiation">
        <sequence resource="EMBL-CDS" id="BAA91508"/>
    </conflict>
    <text>Truncated N-terminus.</text>
</comment>
<keyword id="KW-0002">3D-structure</keyword>
<keyword id="KW-0013">ADP-ribosylation</keyword>
<keyword id="KW-0156">Chromatin regulator</keyword>
<keyword id="KW-0223">Dioxygenase</keyword>
<keyword id="KW-0408">Iron</keyword>
<keyword id="KW-0479">Metal-binding</keyword>
<keyword id="KW-0539">Nucleus</keyword>
<keyword id="KW-0560">Oxidoreductase</keyword>
<keyword id="KW-1267">Proteomics identification</keyword>
<keyword id="KW-1185">Reference proteome</keyword>
<keyword id="KW-0804">Transcription</keyword>
<keyword id="KW-0805">Transcription regulation</keyword>
<keyword id="KW-0832">Ubl conjugation</keyword>
<keyword id="KW-0862">Zinc</keyword>
<organism>
    <name type="scientific">Homo sapiens</name>
    <name type="common">Human</name>
    <dbReference type="NCBI Taxonomy" id="9606"/>
    <lineage>
        <taxon>Eukaryota</taxon>
        <taxon>Metazoa</taxon>
        <taxon>Chordata</taxon>
        <taxon>Craniata</taxon>
        <taxon>Vertebrata</taxon>
        <taxon>Euteleostomi</taxon>
        <taxon>Mammalia</taxon>
        <taxon>Eutheria</taxon>
        <taxon>Euarchontoglires</taxon>
        <taxon>Primates</taxon>
        <taxon>Haplorrhini</taxon>
        <taxon>Catarrhini</taxon>
        <taxon>Hominidae</taxon>
        <taxon>Homo</taxon>
    </lineage>
</organism>
<accession>Q6B0I6</accession>
<accession>B3KPC4</accession>
<accession>Q0VF39</accession>
<accession>Q9NT41</accession>
<accession>Q9NW76</accession>
<reference key="1">
    <citation type="journal article" date="2004" name="Nat. Genet.">
        <title>Complete sequencing and characterization of 21,243 full-length human cDNAs.</title>
        <authorList>
            <person name="Ota T."/>
            <person name="Suzuki Y."/>
            <person name="Nishikawa T."/>
            <person name="Otsuki T."/>
            <person name="Sugiyama T."/>
            <person name="Irie R."/>
            <person name="Wakamatsu A."/>
            <person name="Hayashi K."/>
            <person name="Sato H."/>
            <person name="Nagai K."/>
            <person name="Kimura K."/>
            <person name="Makita H."/>
            <person name="Sekine M."/>
            <person name="Obayashi M."/>
            <person name="Nishi T."/>
            <person name="Shibahara T."/>
            <person name="Tanaka T."/>
            <person name="Ishii S."/>
            <person name="Yamamoto J."/>
            <person name="Saito K."/>
            <person name="Kawai Y."/>
            <person name="Isono Y."/>
            <person name="Nakamura Y."/>
            <person name="Nagahari K."/>
            <person name="Murakami K."/>
            <person name="Yasuda T."/>
            <person name="Iwayanagi T."/>
            <person name="Wagatsuma M."/>
            <person name="Shiratori A."/>
            <person name="Sudo H."/>
            <person name="Hosoiri T."/>
            <person name="Kaku Y."/>
            <person name="Kodaira H."/>
            <person name="Kondo H."/>
            <person name="Sugawara M."/>
            <person name="Takahashi M."/>
            <person name="Kanda K."/>
            <person name="Yokoi T."/>
            <person name="Furuya T."/>
            <person name="Kikkawa E."/>
            <person name="Omura Y."/>
            <person name="Abe K."/>
            <person name="Kamihara K."/>
            <person name="Katsuta N."/>
            <person name="Sato K."/>
            <person name="Tanikawa M."/>
            <person name="Yamazaki M."/>
            <person name="Ninomiya K."/>
            <person name="Ishibashi T."/>
            <person name="Yamashita H."/>
            <person name="Murakawa K."/>
            <person name="Fujimori K."/>
            <person name="Tanai H."/>
            <person name="Kimata M."/>
            <person name="Watanabe M."/>
            <person name="Hiraoka S."/>
            <person name="Chiba Y."/>
            <person name="Ishida S."/>
            <person name="Ono Y."/>
            <person name="Takiguchi S."/>
            <person name="Watanabe S."/>
            <person name="Yosida M."/>
            <person name="Hotuta T."/>
            <person name="Kusano J."/>
            <person name="Kanehori K."/>
            <person name="Takahashi-Fujii A."/>
            <person name="Hara H."/>
            <person name="Tanase T.-O."/>
            <person name="Nomura Y."/>
            <person name="Togiya S."/>
            <person name="Komai F."/>
            <person name="Hara R."/>
            <person name="Takeuchi K."/>
            <person name="Arita M."/>
            <person name="Imose N."/>
            <person name="Musashino K."/>
            <person name="Yuuki H."/>
            <person name="Oshima A."/>
            <person name="Sasaki N."/>
            <person name="Aotsuka S."/>
            <person name="Yoshikawa Y."/>
            <person name="Matsunawa H."/>
            <person name="Ichihara T."/>
            <person name="Shiohata N."/>
            <person name="Sano S."/>
            <person name="Moriya S."/>
            <person name="Momiyama H."/>
            <person name="Satoh N."/>
            <person name="Takami S."/>
            <person name="Terashima Y."/>
            <person name="Suzuki O."/>
            <person name="Nakagawa S."/>
            <person name="Senoh A."/>
            <person name="Mizoguchi H."/>
            <person name="Goto Y."/>
            <person name="Shimizu F."/>
            <person name="Wakebe H."/>
            <person name="Hishigaki H."/>
            <person name="Watanabe T."/>
            <person name="Sugiyama A."/>
            <person name="Takemoto M."/>
            <person name="Kawakami B."/>
            <person name="Yamazaki M."/>
            <person name="Watanabe K."/>
            <person name="Kumagai A."/>
            <person name="Itakura S."/>
            <person name="Fukuzumi Y."/>
            <person name="Fujimori Y."/>
            <person name="Komiyama M."/>
            <person name="Tashiro H."/>
            <person name="Tanigami A."/>
            <person name="Fujiwara T."/>
            <person name="Ono T."/>
            <person name="Yamada K."/>
            <person name="Fujii Y."/>
            <person name="Ozaki K."/>
            <person name="Hirao M."/>
            <person name="Ohmori Y."/>
            <person name="Kawabata A."/>
            <person name="Hikiji T."/>
            <person name="Kobatake N."/>
            <person name="Inagaki H."/>
            <person name="Ikema Y."/>
            <person name="Okamoto S."/>
            <person name="Okitani R."/>
            <person name="Kawakami T."/>
            <person name="Noguchi S."/>
            <person name="Itoh T."/>
            <person name="Shigeta K."/>
            <person name="Senba T."/>
            <person name="Matsumura K."/>
            <person name="Nakajima Y."/>
            <person name="Mizuno T."/>
            <person name="Morinaga M."/>
            <person name="Sasaki M."/>
            <person name="Togashi T."/>
            <person name="Oyama M."/>
            <person name="Hata H."/>
            <person name="Watanabe M."/>
            <person name="Komatsu T."/>
            <person name="Mizushima-Sugano J."/>
            <person name="Satoh T."/>
            <person name="Shirai Y."/>
            <person name="Takahashi Y."/>
            <person name="Nakagawa K."/>
            <person name="Okumura K."/>
            <person name="Nagase T."/>
            <person name="Nomura N."/>
            <person name="Kikuchi H."/>
            <person name="Masuho Y."/>
            <person name="Yamashita R."/>
            <person name="Nakai K."/>
            <person name="Yada T."/>
            <person name="Nakamura Y."/>
            <person name="Ohara O."/>
            <person name="Isogai T."/>
            <person name="Sugano S."/>
        </authorList>
    </citation>
    <scope>NUCLEOTIDE SEQUENCE [LARGE SCALE MRNA]</scope>
    <scope>VARIANT GLN-408</scope>
    <source>
        <tissue>Embryo</tissue>
        <tissue>Teratocarcinoma</tissue>
    </source>
</reference>
<reference key="2">
    <citation type="journal article" date="2006" name="Nature">
        <title>Human chromosome 11 DNA sequence and analysis including novel gene identification.</title>
        <authorList>
            <person name="Taylor T.D."/>
            <person name="Noguchi H."/>
            <person name="Totoki Y."/>
            <person name="Toyoda A."/>
            <person name="Kuroki Y."/>
            <person name="Dewar K."/>
            <person name="Lloyd C."/>
            <person name="Itoh T."/>
            <person name="Takeda T."/>
            <person name="Kim D.-W."/>
            <person name="She X."/>
            <person name="Barlow K.F."/>
            <person name="Bloom T."/>
            <person name="Bruford E."/>
            <person name="Chang J.L."/>
            <person name="Cuomo C.A."/>
            <person name="Eichler E."/>
            <person name="FitzGerald M.G."/>
            <person name="Jaffe D.B."/>
            <person name="LaButti K."/>
            <person name="Nicol R."/>
            <person name="Park H.-S."/>
            <person name="Seaman C."/>
            <person name="Sougnez C."/>
            <person name="Yang X."/>
            <person name="Zimmer A.R."/>
            <person name="Zody M.C."/>
            <person name="Birren B.W."/>
            <person name="Nusbaum C."/>
            <person name="Fujiyama A."/>
            <person name="Hattori M."/>
            <person name="Rogers J."/>
            <person name="Lander E.S."/>
            <person name="Sakaki Y."/>
        </authorList>
    </citation>
    <scope>NUCLEOTIDE SEQUENCE [LARGE SCALE GENOMIC DNA]</scope>
</reference>
<reference key="3">
    <citation type="submission" date="2005-07" db="EMBL/GenBank/DDBJ databases">
        <authorList>
            <person name="Mural R.J."/>
            <person name="Istrail S."/>
            <person name="Sutton G.G."/>
            <person name="Florea L."/>
            <person name="Halpern A.L."/>
            <person name="Mobarry C.M."/>
            <person name="Lippert R."/>
            <person name="Walenz B."/>
            <person name="Shatkay H."/>
            <person name="Dew I."/>
            <person name="Miller J.R."/>
            <person name="Flanigan M.J."/>
            <person name="Edwards N.J."/>
            <person name="Bolanos R."/>
            <person name="Fasulo D."/>
            <person name="Halldorsson B.V."/>
            <person name="Hannenhalli S."/>
            <person name="Turner R."/>
            <person name="Yooseph S."/>
            <person name="Lu F."/>
            <person name="Nusskern D.R."/>
            <person name="Shue B.C."/>
            <person name="Zheng X.H."/>
            <person name="Zhong F."/>
            <person name="Delcher A.L."/>
            <person name="Huson D.H."/>
            <person name="Kravitz S.A."/>
            <person name="Mouchard L."/>
            <person name="Reinert K."/>
            <person name="Remington K.A."/>
            <person name="Clark A.G."/>
            <person name="Waterman M.S."/>
            <person name="Eichler E.E."/>
            <person name="Adams M.D."/>
            <person name="Hunkapiller M.W."/>
            <person name="Myers E.W."/>
            <person name="Venter J.C."/>
        </authorList>
    </citation>
    <scope>NUCLEOTIDE SEQUENCE [LARGE SCALE GENOMIC DNA]</scope>
</reference>
<reference key="4">
    <citation type="journal article" date="2004" name="Genome Res.">
        <title>The status, quality, and expansion of the NIH full-length cDNA project: the Mammalian Gene Collection (MGC).</title>
        <authorList>
            <consortium name="The MGC Project Team"/>
        </authorList>
    </citation>
    <scope>NUCLEOTIDE SEQUENCE [LARGE SCALE MRNA]</scope>
    <scope>VARIANT GLN-408</scope>
    <source>
        <tissue>Brain</tissue>
    </source>
</reference>
<reference key="5">
    <citation type="journal article" date="2007" name="BMC Genomics">
        <title>The full-ORF clone resource of the German cDNA consortium.</title>
        <authorList>
            <person name="Bechtel S."/>
            <person name="Rosenfelder H."/>
            <person name="Duda A."/>
            <person name="Schmidt C.P."/>
            <person name="Ernst U."/>
            <person name="Wellenreuther R."/>
            <person name="Mehrle A."/>
            <person name="Schuster C."/>
            <person name="Bahr A."/>
            <person name="Bloecker H."/>
            <person name="Heubner D."/>
            <person name="Hoerlein A."/>
            <person name="Michel G."/>
            <person name="Wedler H."/>
            <person name="Koehrer K."/>
            <person name="Ottenwaelder B."/>
            <person name="Poustka A."/>
            <person name="Wiemann S."/>
            <person name="Schupp I."/>
        </authorList>
    </citation>
    <scope>NUCLEOTIDE SEQUENCE [LARGE SCALE MRNA] OF 395-523</scope>
    <source>
        <tissue>Testis</tissue>
    </source>
</reference>
<reference key="6">
    <citation type="journal article" date="2004" name="Int. J. Oncol.">
        <title>Identification and characterization of JMJD2 family genes in silico.</title>
        <authorList>
            <person name="Katoh M."/>
            <person name="Katoh M."/>
        </authorList>
    </citation>
    <scope>IDENTIFICATION</scope>
</reference>
<reference key="7">
    <citation type="journal article" date="2006" name="Cell">
        <title>Reversal of histone lysine trimethylation by the JMJD2 family of histone demethylases.</title>
        <authorList>
            <person name="Whetstine J.R."/>
            <person name="Nottke A."/>
            <person name="Lan F."/>
            <person name="Huarte M."/>
            <person name="Smolikov S."/>
            <person name="Chen Z."/>
            <person name="Spooner E."/>
            <person name="Li E."/>
            <person name="Zhang G."/>
            <person name="Colaiacovo M."/>
            <person name="Shi Y."/>
        </authorList>
    </citation>
    <scope>FUNCTION</scope>
    <scope>ENZYME ACTIVITY</scope>
</reference>
<reference key="8">
    <citation type="journal article" date="2012" name="Mol. Cell">
        <title>Poly (ADP-ribose) glycohydrolase regulates retinoic acid receptor-mediated gene expression.</title>
        <authorList>
            <person name="Le May N."/>
            <person name="Iltis I."/>
            <person name="Ame J.C."/>
            <person name="Zhovmer A."/>
            <person name="Biard D."/>
            <person name="Egly J.M."/>
            <person name="Schreiber V."/>
            <person name="Coin F."/>
        </authorList>
    </citation>
    <scope>ADP-RIBOSYLATION AT GLU-26 AND GLU-27</scope>
</reference>
<reference key="9">
    <citation type="journal article" date="2022" name="Proc. Natl. Acad. Sci. U.S.A.">
        <title>TRIM14 inhibits OPTN-mediated autophagic degradation of KDM4D to epigenetically regulate inflammation.</title>
        <authorList>
            <person name="Liu D."/>
            <person name="Zhao Z."/>
            <person name="She Y."/>
            <person name="Zhang L."/>
            <person name="Chen X."/>
            <person name="Ma L."/>
            <person name="Cui J."/>
        </authorList>
    </citation>
    <scope>FUNCTION</scope>
    <scope>SUBCELLULAR LOCATION</scope>
    <scope>DEUBIQUITINATION BY USP14</scope>
    <scope>INTERACTION WITH TRIM14</scope>
</reference>
<reference key="10">
    <citation type="journal article" date="2016" name="J. Med. Chem.">
        <title>8-Substituted Pyrido[3,4-d]pyrimidin-4(3H)-one Derivatives As Potent, Cell Permeable, KDM4 (JMJD2) and KDM5 (JARID1) Histone Lysine Demethylase Inhibitors.</title>
        <authorList>
            <person name="Bavetsias V."/>
            <person name="Lanigan R.M."/>
            <person name="Ruda G.F."/>
            <person name="Atrash B."/>
            <person name="McLaughlin M.G."/>
            <person name="Tumber A."/>
            <person name="Mok N.Y."/>
            <person name="Le Bihan Y.V."/>
            <person name="Dempster S."/>
            <person name="Boxall K.J."/>
            <person name="Jeganathan F."/>
            <person name="Hatch S.B."/>
            <person name="Savitsky P."/>
            <person name="Velupillai S."/>
            <person name="Krojer T."/>
            <person name="England K.S."/>
            <person name="Sejberg J."/>
            <person name="Thai C."/>
            <person name="Donovan A."/>
            <person name="Pal A."/>
            <person name="Scozzafava G."/>
            <person name="Bennett J.M."/>
            <person name="Kawamura A."/>
            <person name="Johansson C."/>
            <person name="Szykowska A."/>
            <person name="Gileadi C."/>
            <person name="Burgess-Brown N.A."/>
            <person name="von Delft F."/>
            <person name="Oppermann U."/>
            <person name="Walters Z."/>
            <person name="Shipley J."/>
            <person name="Raynaud F.I."/>
            <person name="Westaway S.M."/>
            <person name="Prinjha R.K."/>
            <person name="Fedorov O."/>
            <person name="Burke R."/>
            <person name="Schofield C.J."/>
            <person name="Westwood I.M."/>
            <person name="Bountra C."/>
            <person name="Muller S."/>
            <person name="van Montfort R.L."/>
            <person name="Brennan P.E."/>
            <person name="Blagg J."/>
        </authorList>
    </citation>
    <scope>X-RAY CRYSTALLOGRAPHY (1.41 ANGSTROMS) OF 11-340 IN COMPLEX WITH INHIBITORS; ZINC AND NICKEL</scope>
</reference>
<gene>
    <name type="primary">KDM4D</name>
    <name type="synonym">JHDM3D</name>
    <name type="synonym">JMJD2D</name>
</gene>
<protein>
    <recommendedName>
        <fullName>Lysine-specific demethylase 4D</fullName>
        <ecNumber evidence="8">1.14.11.66</ecNumber>
    </recommendedName>
    <alternativeName>
        <fullName>JmjC domain-containing histone demethylation protein 3D</fullName>
    </alternativeName>
    <alternativeName>
        <fullName>Jumonji domain-containing protein 2D</fullName>
    </alternativeName>
    <alternativeName>
        <fullName evidence="11">[histone H3]-trimethyl-L-lysine(9) demethylase 4D</fullName>
    </alternativeName>
</protein>
<dbReference type="EC" id="1.14.11.66" evidence="8"/>
<dbReference type="EMBL" id="AK001113">
    <property type="protein sequence ID" value="BAA91508.1"/>
    <property type="status" value="ALT_INIT"/>
    <property type="molecule type" value="mRNA"/>
</dbReference>
<dbReference type="EMBL" id="AK056162">
    <property type="protein sequence ID" value="BAG51636.1"/>
    <property type="molecule type" value="mRNA"/>
</dbReference>
<dbReference type="EMBL" id="AP002383">
    <property type="status" value="NOT_ANNOTATED_CDS"/>
    <property type="molecule type" value="Genomic_DNA"/>
</dbReference>
<dbReference type="EMBL" id="CH471065">
    <property type="protein sequence ID" value="EAW66952.1"/>
    <property type="molecule type" value="Genomic_DNA"/>
</dbReference>
<dbReference type="EMBL" id="BC074739">
    <property type="protein sequence ID" value="AAH74739.1"/>
    <property type="molecule type" value="mRNA"/>
</dbReference>
<dbReference type="EMBL" id="BC119010">
    <property type="protein sequence ID" value="AAI19011.1"/>
    <property type="molecule type" value="mRNA"/>
</dbReference>
<dbReference type="EMBL" id="BC122858">
    <property type="protein sequence ID" value="AAI22859.1"/>
    <property type="molecule type" value="mRNA"/>
</dbReference>
<dbReference type="EMBL" id="AL137545">
    <property type="protein sequence ID" value="CAB70803.1"/>
    <property type="molecule type" value="mRNA"/>
</dbReference>
<dbReference type="CCDS" id="CCDS8302.1"/>
<dbReference type="PIR" id="T46388">
    <property type="entry name" value="T46388"/>
</dbReference>
<dbReference type="RefSeq" id="NP_060509.2">
    <property type="nucleotide sequence ID" value="NM_018039.2"/>
</dbReference>
<dbReference type="PDB" id="3DXT">
    <property type="method" value="X-ray"/>
    <property type="resolution" value="1.80 A"/>
    <property type="chains" value="A=1-354"/>
</dbReference>
<dbReference type="PDB" id="3DXU">
    <property type="method" value="X-ray"/>
    <property type="resolution" value="2.20 A"/>
    <property type="chains" value="A=11-341"/>
</dbReference>
<dbReference type="PDB" id="4D6Q">
    <property type="method" value="X-ray"/>
    <property type="resolution" value="1.29 A"/>
    <property type="chains" value="A=1-342"/>
</dbReference>
<dbReference type="PDB" id="4D6R">
    <property type="method" value="X-ray"/>
    <property type="resolution" value="1.40 A"/>
    <property type="chains" value="A=1-342"/>
</dbReference>
<dbReference type="PDB" id="4D6S">
    <property type="method" value="X-ray"/>
    <property type="resolution" value="1.40 A"/>
    <property type="chains" value="A=1-342"/>
</dbReference>
<dbReference type="PDB" id="4HON">
    <property type="method" value="X-ray"/>
    <property type="resolution" value="1.80 A"/>
    <property type="chains" value="A/B=12-341"/>
</dbReference>
<dbReference type="PDB" id="4HOO">
    <property type="method" value="X-ray"/>
    <property type="resolution" value="2.50 A"/>
    <property type="chains" value="A/B=12-341"/>
</dbReference>
<dbReference type="PDB" id="5F5A">
    <property type="method" value="X-ray"/>
    <property type="resolution" value="1.41 A"/>
    <property type="chains" value="A=1-342"/>
</dbReference>
<dbReference type="PDB" id="5F5C">
    <property type="method" value="X-ray"/>
    <property type="resolution" value="1.88 A"/>
    <property type="chains" value="A=1-342"/>
</dbReference>
<dbReference type="PDB" id="5FP4">
    <property type="method" value="X-ray"/>
    <property type="resolution" value="2.00 A"/>
    <property type="chains" value="A=11-341"/>
</dbReference>
<dbReference type="PDB" id="5FP7">
    <property type="method" value="X-ray"/>
    <property type="resolution" value="2.00 A"/>
    <property type="chains" value="A=11-341"/>
</dbReference>
<dbReference type="PDB" id="5FP8">
    <property type="method" value="X-ray"/>
    <property type="resolution" value="1.98 A"/>
    <property type="chains" value="A=11-341"/>
</dbReference>
<dbReference type="PDB" id="5FP9">
    <property type="method" value="X-ray"/>
    <property type="resolution" value="2.00 A"/>
    <property type="chains" value="A=11-341"/>
</dbReference>
<dbReference type="PDB" id="5FPA">
    <property type="method" value="X-ray"/>
    <property type="resolution" value="1.96 A"/>
    <property type="chains" value="A=11-341"/>
</dbReference>
<dbReference type="PDB" id="5FPB">
    <property type="method" value="X-ray"/>
    <property type="resolution" value="1.91 A"/>
    <property type="chains" value="A=11-341"/>
</dbReference>
<dbReference type="PDB" id="5PH0">
    <property type="method" value="X-ray"/>
    <property type="resolution" value="1.34 A"/>
    <property type="chains" value="A=1-342"/>
</dbReference>
<dbReference type="PDB" id="5PH1">
    <property type="method" value="X-ray"/>
    <property type="resolution" value="1.25 A"/>
    <property type="chains" value="A=1-342"/>
</dbReference>
<dbReference type="PDB" id="5PH2">
    <property type="method" value="X-ray"/>
    <property type="resolution" value="1.45 A"/>
    <property type="chains" value="A=1-342"/>
</dbReference>
<dbReference type="PDB" id="5PH3">
    <property type="method" value="X-ray"/>
    <property type="resolution" value="1.24 A"/>
    <property type="chains" value="A=1-342"/>
</dbReference>
<dbReference type="PDB" id="5PH4">
    <property type="method" value="X-ray"/>
    <property type="resolution" value="1.27 A"/>
    <property type="chains" value="A=1-342"/>
</dbReference>
<dbReference type="PDB" id="5PH5">
    <property type="method" value="X-ray"/>
    <property type="resolution" value="1.35 A"/>
    <property type="chains" value="A=1-342"/>
</dbReference>
<dbReference type="PDB" id="5PH6">
    <property type="method" value="X-ray"/>
    <property type="resolution" value="1.74 A"/>
    <property type="chains" value="A=1-342"/>
</dbReference>
<dbReference type="PDB" id="5PH7">
    <property type="method" value="X-ray"/>
    <property type="resolution" value="1.43 A"/>
    <property type="chains" value="A=1-342"/>
</dbReference>
<dbReference type="PDB" id="5PH8">
    <property type="method" value="X-ray"/>
    <property type="resolution" value="1.40 A"/>
    <property type="chains" value="A=1-342"/>
</dbReference>
<dbReference type="PDB" id="5PH9">
    <property type="method" value="X-ray"/>
    <property type="resolution" value="1.48 A"/>
    <property type="chains" value="A=1-342"/>
</dbReference>
<dbReference type="PDB" id="5PHA">
    <property type="method" value="X-ray"/>
    <property type="resolution" value="1.45 A"/>
    <property type="chains" value="A=1-342"/>
</dbReference>
<dbReference type="PDB" id="5PHB">
    <property type="method" value="X-ray"/>
    <property type="resolution" value="1.34 A"/>
    <property type="chains" value="A=1-342"/>
</dbReference>
<dbReference type="PDB" id="5PHC">
    <property type="method" value="X-ray"/>
    <property type="resolution" value="1.29 A"/>
    <property type="chains" value="A=1-342"/>
</dbReference>
<dbReference type="PDB" id="5PHD">
    <property type="method" value="X-ray"/>
    <property type="resolution" value="1.36 A"/>
    <property type="chains" value="A=1-342"/>
</dbReference>
<dbReference type="PDB" id="5PHE">
    <property type="method" value="X-ray"/>
    <property type="resolution" value="1.35 A"/>
    <property type="chains" value="A=1-342"/>
</dbReference>
<dbReference type="PDB" id="5PHF">
    <property type="method" value="X-ray"/>
    <property type="resolution" value="1.39 A"/>
    <property type="chains" value="A=1-342"/>
</dbReference>
<dbReference type="PDB" id="5PHG">
    <property type="method" value="X-ray"/>
    <property type="resolution" value="1.40 A"/>
    <property type="chains" value="A=1-342"/>
</dbReference>
<dbReference type="PDB" id="5PHH">
    <property type="method" value="X-ray"/>
    <property type="resolution" value="1.60 A"/>
    <property type="chains" value="A=1-342"/>
</dbReference>
<dbReference type="PDB" id="5PHI">
    <property type="method" value="X-ray"/>
    <property type="resolution" value="1.97 A"/>
    <property type="chains" value="A=1-342"/>
</dbReference>
<dbReference type="PDB" id="5PHJ">
    <property type="method" value="X-ray"/>
    <property type="resolution" value="1.15 A"/>
    <property type="chains" value="A=1-342"/>
</dbReference>
<dbReference type="PDB" id="5PHK">
    <property type="method" value="X-ray"/>
    <property type="resolution" value="1.25 A"/>
    <property type="chains" value="A=1-342"/>
</dbReference>
<dbReference type="PDB" id="5PHL">
    <property type="method" value="X-ray"/>
    <property type="resolution" value="1.14 A"/>
    <property type="chains" value="A=1-342"/>
</dbReference>
<dbReference type="PDB" id="5PHM">
    <property type="method" value="X-ray"/>
    <property type="resolution" value="1.40 A"/>
    <property type="chains" value="A=1-342"/>
</dbReference>
<dbReference type="PDB" id="5PHN">
    <property type="method" value="X-ray"/>
    <property type="resolution" value="1.29 A"/>
    <property type="chains" value="A=1-342"/>
</dbReference>
<dbReference type="PDB" id="5PHO">
    <property type="method" value="X-ray"/>
    <property type="resolution" value="1.40 A"/>
    <property type="chains" value="A=1-342"/>
</dbReference>
<dbReference type="PDB" id="5PHP">
    <property type="method" value="X-ray"/>
    <property type="resolution" value="1.72 A"/>
    <property type="chains" value="A=1-342"/>
</dbReference>
<dbReference type="PDB" id="5PHQ">
    <property type="method" value="X-ray"/>
    <property type="resolution" value="2.23 A"/>
    <property type="chains" value="A=1-342"/>
</dbReference>
<dbReference type="PDB" id="5PHR">
    <property type="method" value="X-ray"/>
    <property type="resolution" value="1.66 A"/>
    <property type="chains" value="A=1-342"/>
</dbReference>
<dbReference type="PDB" id="5PHS">
    <property type="method" value="X-ray"/>
    <property type="resolution" value="2.54 A"/>
    <property type="chains" value="A=1-342"/>
</dbReference>
<dbReference type="PDB" id="5PHT">
    <property type="method" value="X-ray"/>
    <property type="resolution" value="1.83 A"/>
    <property type="chains" value="A=1-342"/>
</dbReference>
<dbReference type="PDB" id="5PHU">
    <property type="method" value="X-ray"/>
    <property type="resolution" value="1.79 A"/>
    <property type="chains" value="A=1-342"/>
</dbReference>
<dbReference type="PDB" id="5PHV">
    <property type="method" value="X-ray"/>
    <property type="resolution" value="1.83 A"/>
    <property type="chains" value="A=1-342"/>
</dbReference>
<dbReference type="PDB" id="5PHW">
    <property type="method" value="X-ray"/>
    <property type="resolution" value="1.31 A"/>
    <property type="chains" value="A=1-342"/>
</dbReference>
<dbReference type="PDB" id="5PHX">
    <property type="method" value="X-ray"/>
    <property type="resolution" value="1.27 A"/>
    <property type="chains" value="A=1-342"/>
</dbReference>
<dbReference type="PDB" id="5PHY">
    <property type="method" value="X-ray"/>
    <property type="resolution" value="1.34 A"/>
    <property type="chains" value="A=1-342"/>
</dbReference>
<dbReference type="PDB" id="5PHZ">
    <property type="method" value="X-ray"/>
    <property type="resolution" value="1.47 A"/>
    <property type="chains" value="A=1-342"/>
</dbReference>
<dbReference type="PDB" id="5PI0">
    <property type="method" value="X-ray"/>
    <property type="resolution" value="1.50 A"/>
    <property type="chains" value="A=1-342"/>
</dbReference>
<dbReference type="PDB" id="5PI1">
    <property type="method" value="X-ray"/>
    <property type="resolution" value="1.34 A"/>
    <property type="chains" value="A=1-342"/>
</dbReference>
<dbReference type="PDB" id="5PI2">
    <property type="method" value="X-ray"/>
    <property type="resolution" value="1.52 A"/>
    <property type="chains" value="A=1-342"/>
</dbReference>
<dbReference type="PDB" id="5PI3">
    <property type="method" value="X-ray"/>
    <property type="resolution" value="1.29 A"/>
    <property type="chains" value="A=1-342"/>
</dbReference>
<dbReference type="PDB" id="5PI4">
    <property type="method" value="X-ray"/>
    <property type="resolution" value="1.35 A"/>
    <property type="chains" value="A=1-342"/>
</dbReference>
<dbReference type="PDB" id="5PI5">
    <property type="method" value="X-ray"/>
    <property type="resolution" value="1.42 A"/>
    <property type="chains" value="A=1-342"/>
</dbReference>
<dbReference type="PDB" id="5PI6">
    <property type="method" value="X-ray"/>
    <property type="resolution" value="1.29 A"/>
    <property type="chains" value="A=1-342"/>
</dbReference>
<dbReference type="PDB" id="5PI7">
    <property type="method" value="X-ray"/>
    <property type="resolution" value="1.61 A"/>
    <property type="chains" value="A=1-342"/>
</dbReference>
<dbReference type="PDB" id="5PI8">
    <property type="method" value="X-ray"/>
    <property type="resolution" value="1.27 A"/>
    <property type="chains" value="A=1-342"/>
</dbReference>
<dbReference type="PDB" id="5PI9">
    <property type="method" value="X-ray"/>
    <property type="resolution" value="1.45 A"/>
    <property type="chains" value="A=1-342"/>
</dbReference>
<dbReference type="PDB" id="5PIA">
    <property type="method" value="X-ray"/>
    <property type="resolution" value="1.18 A"/>
    <property type="chains" value="A=1-342"/>
</dbReference>
<dbReference type="PDB" id="5PIB">
    <property type="method" value="X-ray"/>
    <property type="resolution" value="1.64 A"/>
    <property type="chains" value="A=1-342"/>
</dbReference>
<dbReference type="PDB" id="5PIC">
    <property type="method" value="X-ray"/>
    <property type="resolution" value="1.29 A"/>
    <property type="chains" value="A=1-342"/>
</dbReference>
<dbReference type="PDB" id="5PID">
    <property type="method" value="X-ray"/>
    <property type="resolution" value="1.50 A"/>
    <property type="chains" value="A=1-342"/>
</dbReference>
<dbReference type="PDB" id="5PIE">
    <property type="method" value="X-ray"/>
    <property type="resolution" value="1.42 A"/>
    <property type="chains" value="A=1-342"/>
</dbReference>
<dbReference type="PDB" id="5PIF">
    <property type="method" value="X-ray"/>
    <property type="resolution" value="1.37 A"/>
    <property type="chains" value="A=1-342"/>
</dbReference>
<dbReference type="PDB" id="5PIG">
    <property type="method" value="X-ray"/>
    <property type="resolution" value="1.44 A"/>
    <property type="chains" value="A=1-342"/>
</dbReference>
<dbReference type="PDB" id="5PIH">
    <property type="method" value="X-ray"/>
    <property type="resolution" value="1.79 A"/>
    <property type="chains" value="A=1-342"/>
</dbReference>
<dbReference type="PDB" id="5PII">
    <property type="method" value="X-ray"/>
    <property type="resolution" value="1.45 A"/>
    <property type="chains" value="A=1-342"/>
</dbReference>
<dbReference type="PDB" id="5PIJ">
    <property type="method" value="X-ray"/>
    <property type="resolution" value="1.45 A"/>
    <property type="chains" value="A=1-342"/>
</dbReference>
<dbReference type="PDB" id="5PIK">
    <property type="method" value="X-ray"/>
    <property type="resolution" value="1.80 A"/>
    <property type="chains" value="A=1-342"/>
</dbReference>
<dbReference type="PDB" id="5PIL">
    <property type="method" value="X-ray"/>
    <property type="resolution" value="1.65 A"/>
    <property type="chains" value="A=1-342"/>
</dbReference>
<dbReference type="PDB" id="5PIM">
    <property type="method" value="X-ray"/>
    <property type="resolution" value="1.25 A"/>
    <property type="chains" value="A=1-342"/>
</dbReference>
<dbReference type="PDB" id="5PIN">
    <property type="method" value="X-ray"/>
    <property type="resolution" value="1.50 A"/>
    <property type="chains" value="A=1-342"/>
</dbReference>
<dbReference type="PDB" id="5PIO">
    <property type="method" value="X-ray"/>
    <property type="resolution" value="1.72 A"/>
    <property type="chains" value="A=1-342"/>
</dbReference>
<dbReference type="PDB" id="5PIP">
    <property type="method" value="X-ray"/>
    <property type="resolution" value="1.42 A"/>
    <property type="chains" value="A=1-342"/>
</dbReference>
<dbReference type="PDB" id="5PIQ">
    <property type="method" value="X-ray"/>
    <property type="resolution" value="1.50 A"/>
    <property type="chains" value="A=1-342"/>
</dbReference>
<dbReference type="PDB" id="5PIR">
    <property type="method" value="X-ray"/>
    <property type="resolution" value="1.45 A"/>
    <property type="chains" value="A=1-342"/>
</dbReference>
<dbReference type="PDB" id="5PIS">
    <property type="method" value="X-ray"/>
    <property type="resolution" value="1.30 A"/>
    <property type="chains" value="A=1-342"/>
</dbReference>
<dbReference type="PDB" id="5PIT">
    <property type="method" value="X-ray"/>
    <property type="resolution" value="1.79 A"/>
    <property type="chains" value="A=1-342"/>
</dbReference>
<dbReference type="PDB" id="5PIU">
    <property type="method" value="X-ray"/>
    <property type="resolution" value="1.48 A"/>
    <property type="chains" value="A=1-342"/>
</dbReference>
<dbReference type="PDB" id="5PIV">
    <property type="method" value="X-ray"/>
    <property type="resolution" value="1.43 A"/>
    <property type="chains" value="A=1-342"/>
</dbReference>
<dbReference type="PDB" id="5PIW">
    <property type="method" value="X-ray"/>
    <property type="resolution" value="1.23 A"/>
    <property type="chains" value="A=1-342"/>
</dbReference>
<dbReference type="PDB" id="5PIX">
    <property type="method" value="X-ray"/>
    <property type="resolution" value="1.35 A"/>
    <property type="chains" value="A=1-342"/>
</dbReference>
<dbReference type="PDB" id="5PIY">
    <property type="method" value="X-ray"/>
    <property type="resolution" value="1.31 A"/>
    <property type="chains" value="A=1-342"/>
</dbReference>
<dbReference type="PDB" id="5PIZ">
    <property type="method" value="X-ray"/>
    <property type="resolution" value="1.38 A"/>
    <property type="chains" value="A=1-342"/>
</dbReference>
<dbReference type="PDB" id="5PJ0">
    <property type="method" value="X-ray"/>
    <property type="resolution" value="1.31 A"/>
    <property type="chains" value="A=1-342"/>
</dbReference>
<dbReference type="PDB" id="5PJ1">
    <property type="method" value="X-ray"/>
    <property type="resolution" value="1.35 A"/>
    <property type="chains" value="A=1-342"/>
</dbReference>
<dbReference type="PDB" id="5PJ2">
    <property type="method" value="X-ray"/>
    <property type="resolution" value="1.44 A"/>
    <property type="chains" value="A=1-342"/>
</dbReference>
<dbReference type="PDB" id="5PJ3">
    <property type="method" value="X-ray"/>
    <property type="resolution" value="1.30 A"/>
    <property type="chains" value="A=1-342"/>
</dbReference>
<dbReference type="PDB" id="5PJ4">
    <property type="method" value="X-ray"/>
    <property type="resolution" value="1.52 A"/>
    <property type="chains" value="A=1-342"/>
</dbReference>
<dbReference type="PDB" id="5PJ5">
    <property type="method" value="X-ray"/>
    <property type="resolution" value="1.24 A"/>
    <property type="chains" value="A=1-342"/>
</dbReference>
<dbReference type="PDB" id="5PJ6">
    <property type="method" value="X-ray"/>
    <property type="resolution" value="1.35 A"/>
    <property type="chains" value="A=1-342"/>
</dbReference>
<dbReference type="PDB" id="5PJ7">
    <property type="method" value="X-ray"/>
    <property type="resolution" value="1.39 A"/>
    <property type="chains" value="A=1-342"/>
</dbReference>
<dbReference type="PDB" id="5PJ8">
    <property type="method" value="X-ray"/>
    <property type="resolution" value="1.40 A"/>
    <property type="chains" value="A=1-342"/>
</dbReference>
<dbReference type="PDB" id="5PJ9">
    <property type="method" value="X-ray"/>
    <property type="resolution" value="1.50 A"/>
    <property type="chains" value="A=1-342"/>
</dbReference>
<dbReference type="PDB" id="5PJA">
    <property type="method" value="X-ray"/>
    <property type="resolution" value="1.89 A"/>
    <property type="chains" value="A=1-342"/>
</dbReference>
<dbReference type="PDB" id="5PJB">
    <property type="method" value="X-ray"/>
    <property type="resolution" value="1.58 A"/>
    <property type="chains" value="A=1-342"/>
</dbReference>
<dbReference type="PDB" id="5PJC">
    <property type="method" value="X-ray"/>
    <property type="resolution" value="1.40 A"/>
    <property type="chains" value="A=1-342"/>
</dbReference>
<dbReference type="PDB" id="5PJD">
    <property type="method" value="X-ray"/>
    <property type="resolution" value="1.43 A"/>
    <property type="chains" value="A=1-342"/>
</dbReference>
<dbReference type="PDB" id="5PJE">
    <property type="method" value="X-ray"/>
    <property type="resolution" value="1.37 A"/>
    <property type="chains" value="A=1-342"/>
</dbReference>
<dbReference type="PDB" id="5PJF">
    <property type="method" value="X-ray"/>
    <property type="resolution" value="1.47 A"/>
    <property type="chains" value="A=1-342"/>
</dbReference>
<dbReference type="PDB" id="5PJG">
    <property type="method" value="X-ray"/>
    <property type="resolution" value="1.40 A"/>
    <property type="chains" value="A=1-342"/>
</dbReference>
<dbReference type="PDB" id="5PJH">
    <property type="method" value="X-ray"/>
    <property type="resolution" value="1.18 A"/>
    <property type="chains" value="A=1-342"/>
</dbReference>
<dbReference type="PDB" id="5PJI">
    <property type="method" value="X-ray"/>
    <property type="resolution" value="1.34 A"/>
    <property type="chains" value="A=1-342"/>
</dbReference>
<dbReference type="PDB" id="5PJJ">
    <property type="method" value="X-ray"/>
    <property type="resolution" value="1.67 A"/>
    <property type="chains" value="A=1-342"/>
</dbReference>
<dbReference type="PDB" id="5PJK">
    <property type="method" value="X-ray"/>
    <property type="resolution" value="1.69 A"/>
    <property type="chains" value="A=1-342"/>
</dbReference>
<dbReference type="PDB" id="5PJL">
    <property type="method" value="X-ray"/>
    <property type="resolution" value="1.52 A"/>
    <property type="chains" value="A=1-342"/>
</dbReference>
<dbReference type="PDB" id="5PJM">
    <property type="method" value="X-ray"/>
    <property type="resolution" value="1.43 A"/>
    <property type="chains" value="A=1-342"/>
</dbReference>
<dbReference type="PDB" id="5PJN">
    <property type="method" value="X-ray"/>
    <property type="resolution" value="1.48 A"/>
    <property type="chains" value="A=1-342"/>
</dbReference>
<dbReference type="PDB" id="5PJO">
    <property type="method" value="X-ray"/>
    <property type="resolution" value="1.35 A"/>
    <property type="chains" value="A=1-342"/>
</dbReference>
<dbReference type="PDB" id="5PJP">
    <property type="method" value="X-ray"/>
    <property type="resolution" value="1.39 A"/>
    <property type="chains" value="A=1-342"/>
</dbReference>
<dbReference type="PDB" id="5PJQ">
    <property type="method" value="X-ray"/>
    <property type="resolution" value="1.38 A"/>
    <property type="chains" value="A=1-342"/>
</dbReference>
<dbReference type="PDB" id="5PJR">
    <property type="method" value="X-ray"/>
    <property type="resolution" value="1.29 A"/>
    <property type="chains" value="A=1-342"/>
</dbReference>
<dbReference type="PDB" id="5PJS">
    <property type="method" value="X-ray"/>
    <property type="resolution" value="1.64 A"/>
    <property type="chains" value="A=1-342"/>
</dbReference>
<dbReference type="PDB" id="5PJT">
    <property type="method" value="X-ray"/>
    <property type="resolution" value="1.54 A"/>
    <property type="chains" value="A=1-342"/>
</dbReference>
<dbReference type="PDB" id="5PJU">
    <property type="method" value="X-ray"/>
    <property type="resolution" value="1.27 A"/>
    <property type="chains" value="A=1-342"/>
</dbReference>
<dbReference type="PDB" id="5PJV">
    <property type="method" value="X-ray"/>
    <property type="resolution" value="1.34 A"/>
    <property type="chains" value="A=1-342"/>
</dbReference>
<dbReference type="PDB" id="5PJW">
    <property type="method" value="X-ray"/>
    <property type="resolution" value="1.56 A"/>
    <property type="chains" value="A=1-342"/>
</dbReference>
<dbReference type="PDB" id="5PJX">
    <property type="method" value="X-ray"/>
    <property type="resolution" value="1.35 A"/>
    <property type="chains" value="A=1-342"/>
</dbReference>
<dbReference type="PDB" id="5PJY">
    <property type="method" value="X-ray"/>
    <property type="resolution" value="1.34 A"/>
    <property type="chains" value="A=1-342"/>
</dbReference>
<dbReference type="PDB" id="5PJZ">
    <property type="method" value="X-ray"/>
    <property type="resolution" value="1.29 A"/>
    <property type="chains" value="A=1-342"/>
</dbReference>
<dbReference type="PDB" id="5PK0">
    <property type="method" value="X-ray"/>
    <property type="resolution" value="1.28 A"/>
    <property type="chains" value="A=1-342"/>
</dbReference>
<dbReference type="PDB" id="5PK1">
    <property type="method" value="X-ray"/>
    <property type="resolution" value="1.35 A"/>
    <property type="chains" value="A=1-342"/>
</dbReference>
<dbReference type="PDB" id="5PK2">
    <property type="method" value="X-ray"/>
    <property type="resolution" value="1.42 A"/>
    <property type="chains" value="A=1-342"/>
</dbReference>
<dbReference type="PDB" id="5PK3">
    <property type="method" value="X-ray"/>
    <property type="resolution" value="1.42 A"/>
    <property type="chains" value="A=1-342"/>
</dbReference>
<dbReference type="PDB" id="5PK4">
    <property type="method" value="X-ray"/>
    <property type="resolution" value="1.72 A"/>
    <property type="chains" value="A=1-342"/>
</dbReference>
<dbReference type="PDB" id="5PK5">
    <property type="method" value="X-ray"/>
    <property type="resolution" value="1.39 A"/>
    <property type="chains" value="A=1-342"/>
</dbReference>
<dbReference type="PDB" id="5PK6">
    <property type="method" value="X-ray"/>
    <property type="resolution" value="2.38 A"/>
    <property type="chains" value="A=1-342"/>
</dbReference>
<dbReference type="PDB" id="5PK7">
    <property type="method" value="X-ray"/>
    <property type="resolution" value="1.29 A"/>
    <property type="chains" value="A=1-342"/>
</dbReference>
<dbReference type="PDB" id="5PK8">
    <property type="method" value="X-ray"/>
    <property type="resolution" value="1.44 A"/>
    <property type="chains" value="A=1-342"/>
</dbReference>
<dbReference type="PDB" id="5PK9">
    <property type="method" value="X-ray"/>
    <property type="resolution" value="1.34 A"/>
    <property type="chains" value="A=1-342"/>
</dbReference>
<dbReference type="PDB" id="5PKA">
    <property type="method" value="X-ray"/>
    <property type="resolution" value="1.71 A"/>
    <property type="chains" value="A=1-342"/>
</dbReference>
<dbReference type="PDB" id="5PKB">
    <property type="method" value="X-ray"/>
    <property type="resolution" value="1.40 A"/>
    <property type="chains" value="A=1-342"/>
</dbReference>
<dbReference type="PDB" id="5PKC">
    <property type="method" value="X-ray"/>
    <property type="resolution" value="1.29 A"/>
    <property type="chains" value="A=1-342"/>
</dbReference>
<dbReference type="PDB" id="5PKD">
    <property type="method" value="X-ray"/>
    <property type="resolution" value="1.55 A"/>
    <property type="chains" value="A=1-342"/>
</dbReference>
<dbReference type="PDB" id="5PKE">
    <property type="method" value="X-ray"/>
    <property type="resolution" value="1.44 A"/>
    <property type="chains" value="A=1-342"/>
</dbReference>
<dbReference type="PDB" id="5PKF">
    <property type="method" value="X-ray"/>
    <property type="resolution" value="1.34 A"/>
    <property type="chains" value="A=1-342"/>
</dbReference>
<dbReference type="PDB" id="5PKG">
    <property type="method" value="X-ray"/>
    <property type="resolution" value="1.54 A"/>
    <property type="chains" value="A=1-342"/>
</dbReference>
<dbReference type="PDB" id="5PKH">
    <property type="method" value="X-ray"/>
    <property type="resolution" value="1.19 A"/>
    <property type="chains" value="A=1-342"/>
</dbReference>
<dbReference type="PDB" id="5PKI">
    <property type="method" value="X-ray"/>
    <property type="resolution" value="1.19 A"/>
    <property type="chains" value="A=1-342"/>
</dbReference>
<dbReference type="PDB" id="5PKJ">
    <property type="method" value="X-ray"/>
    <property type="resolution" value="1.22 A"/>
    <property type="chains" value="A=1-342"/>
</dbReference>
<dbReference type="PDB" id="5PKK">
    <property type="method" value="X-ray"/>
    <property type="resolution" value="1.50 A"/>
    <property type="chains" value="A=1-342"/>
</dbReference>
<dbReference type="PDB" id="5PKL">
    <property type="method" value="X-ray"/>
    <property type="resolution" value="1.35 A"/>
    <property type="chains" value="A=1-342"/>
</dbReference>
<dbReference type="PDB" id="5PKM">
    <property type="method" value="X-ray"/>
    <property type="resolution" value="1.37 A"/>
    <property type="chains" value="A=1-342"/>
</dbReference>
<dbReference type="PDB" id="5PKN">
    <property type="method" value="X-ray"/>
    <property type="resolution" value="1.30 A"/>
    <property type="chains" value="A=1-342"/>
</dbReference>
<dbReference type="PDB" id="5PKO">
    <property type="method" value="X-ray"/>
    <property type="resolution" value="2.38 A"/>
    <property type="chains" value="A=1-342"/>
</dbReference>
<dbReference type="PDB" id="5PKP">
    <property type="method" value="X-ray"/>
    <property type="resolution" value="1.30 A"/>
    <property type="chains" value="A=1-342"/>
</dbReference>
<dbReference type="PDB" id="5PKQ">
    <property type="method" value="X-ray"/>
    <property type="resolution" value="1.28 A"/>
    <property type="chains" value="A=1-342"/>
</dbReference>
<dbReference type="PDB" id="5PKR">
    <property type="method" value="X-ray"/>
    <property type="resolution" value="1.31 A"/>
    <property type="chains" value="A=1-342"/>
</dbReference>
<dbReference type="PDB" id="5PKS">
    <property type="method" value="X-ray"/>
    <property type="resolution" value="1.50 A"/>
    <property type="chains" value="A=1-342"/>
</dbReference>
<dbReference type="PDB" id="5PKT">
    <property type="method" value="X-ray"/>
    <property type="resolution" value="1.50 A"/>
    <property type="chains" value="A=1-342"/>
</dbReference>
<dbReference type="PDB" id="5PKU">
    <property type="method" value="X-ray"/>
    <property type="resolution" value="1.47 A"/>
    <property type="chains" value="A=1-342"/>
</dbReference>
<dbReference type="PDB" id="5PKV">
    <property type="method" value="X-ray"/>
    <property type="resolution" value="1.35 A"/>
    <property type="chains" value="A=1-342"/>
</dbReference>
<dbReference type="PDB" id="5PKW">
    <property type="method" value="X-ray"/>
    <property type="resolution" value="1.35 A"/>
    <property type="chains" value="A=1-342"/>
</dbReference>
<dbReference type="PDB" id="5PKX">
    <property type="method" value="X-ray"/>
    <property type="resolution" value="1.45 A"/>
    <property type="chains" value="A=1-342"/>
</dbReference>
<dbReference type="PDB" id="5PKY">
    <property type="method" value="X-ray"/>
    <property type="resolution" value="1.25 A"/>
    <property type="chains" value="A=1-342"/>
</dbReference>
<dbReference type="PDB" id="5PKZ">
    <property type="method" value="X-ray"/>
    <property type="resolution" value="1.50 A"/>
    <property type="chains" value="A=1-342"/>
</dbReference>
<dbReference type="PDB" id="5PL0">
    <property type="method" value="X-ray"/>
    <property type="resolution" value="1.27 A"/>
    <property type="chains" value="A=1-342"/>
</dbReference>
<dbReference type="PDB" id="5PL1">
    <property type="method" value="X-ray"/>
    <property type="resolution" value="1.42 A"/>
    <property type="chains" value="A=1-342"/>
</dbReference>
<dbReference type="PDB" id="5PL2">
    <property type="method" value="X-ray"/>
    <property type="resolution" value="1.34 A"/>
    <property type="chains" value="A=1-342"/>
</dbReference>
<dbReference type="PDB" id="5PL3">
    <property type="method" value="X-ray"/>
    <property type="resolution" value="1.27 A"/>
    <property type="chains" value="A=1-342"/>
</dbReference>
<dbReference type="PDB" id="5PL4">
    <property type="method" value="X-ray"/>
    <property type="resolution" value="1.21 A"/>
    <property type="chains" value="A=1-342"/>
</dbReference>
<dbReference type="PDB" id="5PL5">
    <property type="method" value="X-ray"/>
    <property type="resolution" value="1.57 A"/>
    <property type="chains" value="A=1-342"/>
</dbReference>
<dbReference type="PDB" id="5PL6">
    <property type="method" value="X-ray"/>
    <property type="resolution" value="1.29 A"/>
    <property type="chains" value="A=1-342"/>
</dbReference>
<dbReference type="PDB" id="5PL7">
    <property type="method" value="X-ray"/>
    <property type="resolution" value="1.30 A"/>
    <property type="chains" value="A=1-342"/>
</dbReference>
<dbReference type="PDB" id="5PL8">
    <property type="method" value="X-ray"/>
    <property type="resolution" value="1.54 A"/>
    <property type="chains" value="A=1-342"/>
</dbReference>
<dbReference type="PDB" id="5PL9">
    <property type="method" value="X-ray"/>
    <property type="resolution" value="1.65 A"/>
    <property type="chains" value="A=1-342"/>
</dbReference>
<dbReference type="PDB" id="5PLA">
    <property type="method" value="X-ray"/>
    <property type="resolution" value="1.37 A"/>
    <property type="chains" value="A=1-342"/>
</dbReference>
<dbReference type="PDB" id="5PLB">
    <property type="method" value="X-ray"/>
    <property type="resolution" value="1.49 A"/>
    <property type="chains" value="A=1-342"/>
</dbReference>
<dbReference type="PDB" id="5PLC">
    <property type="method" value="X-ray"/>
    <property type="resolution" value="1.49 A"/>
    <property type="chains" value="A=1-342"/>
</dbReference>
<dbReference type="PDB" id="5PLD">
    <property type="method" value="X-ray"/>
    <property type="resolution" value="1.46 A"/>
    <property type="chains" value="A=1-342"/>
</dbReference>
<dbReference type="PDB" id="5PLE">
    <property type="method" value="X-ray"/>
    <property type="resolution" value="1.45 A"/>
    <property type="chains" value="A=1-342"/>
</dbReference>
<dbReference type="PDB" id="5PLF">
    <property type="method" value="X-ray"/>
    <property type="resolution" value="1.33 A"/>
    <property type="chains" value="A=1-342"/>
</dbReference>
<dbReference type="PDB" id="5PLG">
    <property type="method" value="X-ray"/>
    <property type="resolution" value="1.31 A"/>
    <property type="chains" value="A=1-342"/>
</dbReference>
<dbReference type="PDB" id="5PLH">
    <property type="method" value="X-ray"/>
    <property type="resolution" value="1.46 A"/>
    <property type="chains" value="A=1-342"/>
</dbReference>
<dbReference type="PDB" id="5PLI">
    <property type="method" value="X-ray"/>
    <property type="resolution" value="1.39 A"/>
    <property type="chains" value="A=1-342"/>
</dbReference>
<dbReference type="PDB" id="5PLJ">
    <property type="method" value="X-ray"/>
    <property type="resolution" value="1.49 A"/>
    <property type="chains" value="A=1-342"/>
</dbReference>
<dbReference type="PDB" id="5PLK">
    <property type="method" value="X-ray"/>
    <property type="resolution" value="1.14 A"/>
    <property type="chains" value="A=1-342"/>
</dbReference>
<dbReference type="PDB" id="5PLL">
    <property type="method" value="X-ray"/>
    <property type="resolution" value="1.28 A"/>
    <property type="chains" value="A=1-342"/>
</dbReference>
<dbReference type="PDB" id="5PLM">
    <property type="method" value="X-ray"/>
    <property type="resolution" value="1.14 A"/>
    <property type="chains" value="A=1-342"/>
</dbReference>
<dbReference type="PDB" id="5PLN">
    <property type="method" value="X-ray"/>
    <property type="resolution" value="1.14 A"/>
    <property type="chains" value="A=1-342"/>
</dbReference>
<dbReference type="PDB" id="5PLO">
    <property type="method" value="X-ray"/>
    <property type="resolution" value="1.14 A"/>
    <property type="chains" value="A=1-342"/>
</dbReference>
<dbReference type="PDB" id="5PLP">
    <property type="method" value="X-ray"/>
    <property type="resolution" value="1.46 A"/>
    <property type="chains" value="A=1-342"/>
</dbReference>
<dbReference type="PDB" id="5PLQ">
    <property type="method" value="X-ray"/>
    <property type="resolution" value="1.36 A"/>
    <property type="chains" value="A=1-342"/>
</dbReference>
<dbReference type="PDB" id="5PLR">
    <property type="method" value="X-ray"/>
    <property type="resolution" value="1.53 A"/>
    <property type="chains" value="A=1-342"/>
</dbReference>
<dbReference type="PDB" id="5PLS">
    <property type="method" value="X-ray"/>
    <property type="resolution" value="1.70 A"/>
    <property type="chains" value="A=1-342"/>
</dbReference>
<dbReference type="PDB" id="5PLT">
    <property type="method" value="X-ray"/>
    <property type="resolution" value="1.53 A"/>
    <property type="chains" value="A=1-342"/>
</dbReference>
<dbReference type="PDB" id="5PLU">
    <property type="method" value="X-ray"/>
    <property type="resolution" value="1.47 A"/>
    <property type="chains" value="A=1-342"/>
</dbReference>
<dbReference type="PDB" id="5PLV">
    <property type="method" value="X-ray"/>
    <property type="resolution" value="1.14 A"/>
    <property type="chains" value="A=1-342"/>
</dbReference>
<dbReference type="PDB" id="5PLW">
    <property type="method" value="X-ray"/>
    <property type="resolution" value="1.31 A"/>
    <property type="chains" value="A=1-342"/>
</dbReference>
<dbReference type="PDB" id="5PLX">
    <property type="method" value="X-ray"/>
    <property type="resolution" value="1.29 A"/>
    <property type="chains" value="A=1-342"/>
</dbReference>
<dbReference type="PDB" id="5PLY">
    <property type="method" value="X-ray"/>
    <property type="resolution" value="1.38 A"/>
    <property type="chains" value="A=1-342"/>
</dbReference>
<dbReference type="PDB" id="5PLZ">
    <property type="method" value="X-ray"/>
    <property type="resolution" value="1.71 A"/>
    <property type="chains" value="A=1-342"/>
</dbReference>
<dbReference type="PDB" id="5PM0">
    <property type="method" value="X-ray"/>
    <property type="resolution" value="2.14 A"/>
    <property type="chains" value="A=1-342"/>
</dbReference>
<dbReference type="PDB" id="5PM1">
    <property type="method" value="X-ray"/>
    <property type="resolution" value="1.54 A"/>
    <property type="chains" value="A=1-342"/>
</dbReference>
<dbReference type="PDB" id="5PM2">
    <property type="method" value="X-ray"/>
    <property type="resolution" value="1.52 A"/>
    <property type="chains" value="A=1-342"/>
</dbReference>
<dbReference type="PDB" id="5PM3">
    <property type="method" value="X-ray"/>
    <property type="resolution" value="1.46 A"/>
    <property type="chains" value="A=1-342"/>
</dbReference>
<dbReference type="PDB" id="5PM4">
    <property type="method" value="X-ray"/>
    <property type="resolution" value="1.44 A"/>
    <property type="chains" value="A=1-342"/>
</dbReference>
<dbReference type="PDB" id="5PM5">
    <property type="method" value="X-ray"/>
    <property type="resolution" value="1.76 A"/>
    <property type="chains" value="A=1-342"/>
</dbReference>
<dbReference type="PDB" id="5PM6">
    <property type="method" value="X-ray"/>
    <property type="resolution" value="1.78 A"/>
    <property type="chains" value="A=1-342"/>
</dbReference>
<dbReference type="PDB" id="5PM7">
    <property type="method" value="X-ray"/>
    <property type="resolution" value="1.43 A"/>
    <property type="chains" value="A=1-342"/>
</dbReference>
<dbReference type="PDB" id="5PM8">
    <property type="method" value="X-ray"/>
    <property type="resolution" value="1.54 A"/>
    <property type="chains" value="A=1-342"/>
</dbReference>
<dbReference type="PDB" id="5PM9">
    <property type="method" value="X-ray"/>
    <property type="resolution" value="1.50 A"/>
    <property type="chains" value="A=1-342"/>
</dbReference>
<dbReference type="PDB" id="5PMA">
    <property type="method" value="X-ray"/>
    <property type="resolution" value="1.29 A"/>
    <property type="chains" value="A=1-342"/>
</dbReference>
<dbReference type="PDB" id="5PMB">
    <property type="method" value="X-ray"/>
    <property type="resolution" value="1.63 A"/>
    <property type="chains" value="A=1-342"/>
</dbReference>
<dbReference type="PDB" id="5PMC">
    <property type="method" value="X-ray"/>
    <property type="resolution" value="1.58 A"/>
    <property type="chains" value="A=1-342"/>
</dbReference>
<dbReference type="PDB" id="5PMD">
    <property type="method" value="X-ray"/>
    <property type="resolution" value="1.63 A"/>
    <property type="chains" value="A=1-342"/>
</dbReference>
<dbReference type="PDB" id="5PME">
    <property type="method" value="X-ray"/>
    <property type="resolution" value="1.39 A"/>
    <property type="chains" value="A=1-342"/>
</dbReference>
<dbReference type="PDB" id="5PMF">
    <property type="method" value="X-ray"/>
    <property type="resolution" value="1.36 A"/>
    <property type="chains" value="A=1-342"/>
</dbReference>
<dbReference type="PDB" id="5PMG">
    <property type="method" value="X-ray"/>
    <property type="resolution" value="1.51 A"/>
    <property type="chains" value="A=1-342"/>
</dbReference>
<dbReference type="PDB" id="5PMH">
    <property type="method" value="X-ray"/>
    <property type="resolution" value="1.52 A"/>
    <property type="chains" value="A=1-342"/>
</dbReference>
<dbReference type="PDB" id="5PMI">
    <property type="method" value="X-ray"/>
    <property type="resolution" value="1.71 A"/>
    <property type="chains" value="A=1-342"/>
</dbReference>
<dbReference type="PDB" id="5PMJ">
    <property type="method" value="X-ray"/>
    <property type="resolution" value="1.37 A"/>
    <property type="chains" value="A=1-342"/>
</dbReference>
<dbReference type="PDB" id="5PMK">
    <property type="method" value="X-ray"/>
    <property type="resolution" value="1.44 A"/>
    <property type="chains" value="A=1-342"/>
</dbReference>
<dbReference type="PDB" id="5PML">
    <property type="method" value="X-ray"/>
    <property type="resolution" value="1.58 A"/>
    <property type="chains" value="A=1-342"/>
</dbReference>
<dbReference type="PDB" id="5PMM">
    <property type="method" value="X-ray"/>
    <property type="resolution" value="1.39 A"/>
    <property type="chains" value="A=1-342"/>
</dbReference>
<dbReference type="PDB" id="5PMN">
    <property type="method" value="X-ray"/>
    <property type="resolution" value="1.72 A"/>
    <property type="chains" value="A=1-342"/>
</dbReference>
<dbReference type="PDB" id="5PMO">
    <property type="method" value="X-ray"/>
    <property type="resolution" value="1.53 A"/>
    <property type="chains" value="A=1-342"/>
</dbReference>
<dbReference type="PDB" id="5PMP">
    <property type="method" value="X-ray"/>
    <property type="resolution" value="1.55 A"/>
    <property type="chains" value="A=1-342"/>
</dbReference>
<dbReference type="PDB" id="5PMQ">
    <property type="method" value="X-ray"/>
    <property type="resolution" value="1.46 A"/>
    <property type="chains" value="A=1-342"/>
</dbReference>
<dbReference type="PDB" id="5PMR">
    <property type="method" value="X-ray"/>
    <property type="resolution" value="1.51 A"/>
    <property type="chains" value="A=1-342"/>
</dbReference>
<dbReference type="PDB" id="5PMS">
    <property type="method" value="X-ray"/>
    <property type="resolution" value="1.24 A"/>
    <property type="chains" value="A=1-342"/>
</dbReference>
<dbReference type="PDB" id="5PMT">
    <property type="method" value="X-ray"/>
    <property type="resolution" value="1.22 A"/>
    <property type="chains" value="A=1-342"/>
</dbReference>
<dbReference type="PDB" id="5PMU">
    <property type="method" value="X-ray"/>
    <property type="resolution" value="1.48 A"/>
    <property type="chains" value="A=1-342"/>
</dbReference>
<dbReference type="PDB" id="5PMV">
    <property type="method" value="X-ray"/>
    <property type="resolution" value="1.34 A"/>
    <property type="chains" value="A=1-342"/>
</dbReference>
<dbReference type="PDB" id="5PMW">
    <property type="method" value="X-ray"/>
    <property type="resolution" value="1.19 A"/>
    <property type="chains" value="A=1-342"/>
</dbReference>
<dbReference type="PDB" id="5PMX">
    <property type="method" value="X-ray"/>
    <property type="resolution" value="1.14 A"/>
    <property type="chains" value="A=1-342"/>
</dbReference>
<dbReference type="PDB" id="5PMY">
    <property type="method" value="X-ray"/>
    <property type="resolution" value="1.29 A"/>
    <property type="chains" value="A=1-342"/>
</dbReference>
<dbReference type="PDB" id="5PMZ">
    <property type="method" value="X-ray"/>
    <property type="resolution" value="1.15 A"/>
    <property type="chains" value="A=1-342"/>
</dbReference>
<dbReference type="PDB" id="5PN0">
    <property type="method" value="X-ray"/>
    <property type="resolution" value="1.14 A"/>
    <property type="chains" value="A=1-342"/>
</dbReference>
<dbReference type="PDB" id="5PN1">
    <property type="method" value="X-ray"/>
    <property type="resolution" value="1.41 A"/>
    <property type="chains" value="A=1-342"/>
</dbReference>
<dbReference type="PDB" id="5PN2">
    <property type="method" value="X-ray"/>
    <property type="resolution" value="1.41 A"/>
    <property type="chains" value="A=1-342"/>
</dbReference>
<dbReference type="PDB" id="5PN3">
    <property type="method" value="X-ray"/>
    <property type="resolution" value="1.60 A"/>
    <property type="chains" value="A=1-342"/>
</dbReference>
<dbReference type="PDB" id="5PN4">
    <property type="method" value="X-ray"/>
    <property type="resolution" value="1.37 A"/>
    <property type="chains" value="A=1-342"/>
</dbReference>
<dbReference type="PDB" id="5PN5">
    <property type="method" value="X-ray"/>
    <property type="resolution" value="1.30 A"/>
    <property type="chains" value="A=1-342"/>
</dbReference>
<dbReference type="PDB" id="5PN6">
    <property type="method" value="X-ray"/>
    <property type="resolution" value="1.42 A"/>
    <property type="chains" value="A=1-342"/>
</dbReference>
<dbReference type="PDB" id="5PN7">
    <property type="method" value="X-ray"/>
    <property type="resolution" value="1.25 A"/>
    <property type="chains" value="A=1-342"/>
</dbReference>
<dbReference type="PDB" id="5PN8">
    <property type="method" value="X-ray"/>
    <property type="resolution" value="1.34 A"/>
    <property type="chains" value="A=1-342"/>
</dbReference>
<dbReference type="PDB" id="5PN9">
    <property type="method" value="X-ray"/>
    <property type="resolution" value="1.48 A"/>
    <property type="chains" value="A=1-342"/>
</dbReference>
<dbReference type="PDB" id="5PNA">
    <property type="method" value="X-ray"/>
    <property type="resolution" value="1.78 A"/>
    <property type="chains" value="A=1-342"/>
</dbReference>
<dbReference type="PDB" id="5PNB">
    <property type="method" value="X-ray"/>
    <property type="resolution" value="1.23 A"/>
    <property type="chains" value="A=1-342"/>
</dbReference>
<dbReference type="PDB" id="5PNC">
    <property type="method" value="X-ray"/>
    <property type="resolution" value="1.35 A"/>
    <property type="chains" value="A=1-342"/>
</dbReference>
<dbReference type="PDB" id="5PND">
    <property type="method" value="X-ray"/>
    <property type="resolution" value="1.49 A"/>
    <property type="chains" value="A=1-342"/>
</dbReference>
<dbReference type="PDB" id="5PNE">
    <property type="method" value="X-ray"/>
    <property type="resolution" value="1.29 A"/>
    <property type="chains" value="A=1-342"/>
</dbReference>
<dbReference type="PDB" id="5PNF">
    <property type="method" value="X-ray"/>
    <property type="resolution" value="1.24 A"/>
    <property type="chains" value="A=1-342"/>
</dbReference>
<dbReference type="PDB" id="5PNG">
    <property type="method" value="X-ray"/>
    <property type="resolution" value="1.38 A"/>
    <property type="chains" value="A=1-342"/>
</dbReference>
<dbReference type="PDB" id="5PNH">
    <property type="method" value="X-ray"/>
    <property type="resolution" value="1.14 A"/>
    <property type="chains" value="A=1-342"/>
</dbReference>
<dbReference type="PDB" id="5PNI">
    <property type="method" value="X-ray"/>
    <property type="resolution" value="1.45 A"/>
    <property type="chains" value="A=1-342"/>
</dbReference>
<dbReference type="PDB" id="5PNJ">
    <property type="method" value="X-ray"/>
    <property type="resolution" value="1.40 A"/>
    <property type="chains" value="A=1-342"/>
</dbReference>
<dbReference type="PDB" id="5PNK">
    <property type="method" value="X-ray"/>
    <property type="resolution" value="1.27 A"/>
    <property type="chains" value="A=1-342"/>
</dbReference>
<dbReference type="PDB" id="5PNL">
    <property type="method" value="X-ray"/>
    <property type="resolution" value="1.44 A"/>
    <property type="chains" value="A=1-342"/>
</dbReference>
<dbReference type="PDB" id="5PNM">
    <property type="method" value="X-ray"/>
    <property type="resolution" value="1.25 A"/>
    <property type="chains" value="A=1-342"/>
</dbReference>
<dbReference type="PDB" id="5PNN">
    <property type="method" value="X-ray"/>
    <property type="resolution" value="1.21 A"/>
    <property type="chains" value="A=1-342"/>
</dbReference>
<dbReference type="PDB" id="5PNO">
    <property type="method" value="X-ray"/>
    <property type="resolution" value="1.55 A"/>
    <property type="chains" value="A=1-342"/>
</dbReference>
<dbReference type="PDB" id="5PNP">
    <property type="method" value="X-ray"/>
    <property type="resolution" value="1.47 A"/>
    <property type="chains" value="A=1-342"/>
</dbReference>
<dbReference type="PDB" id="5PNQ">
    <property type="method" value="X-ray"/>
    <property type="resolution" value="1.47 A"/>
    <property type="chains" value="A=1-342"/>
</dbReference>
<dbReference type="PDB" id="5PNR">
    <property type="method" value="X-ray"/>
    <property type="resolution" value="1.14 A"/>
    <property type="chains" value="A=1-342"/>
</dbReference>
<dbReference type="PDB" id="5PNS">
    <property type="method" value="X-ray"/>
    <property type="resolution" value="1.36 A"/>
    <property type="chains" value="A=1-342"/>
</dbReference>
<dbReference type="PDB" id="5PNU">
    <property type="method" value="X-ray"/>
    <property type="resolution" value="1.14 A"/>
    <property type="chains" value="A=1-342"/>
</dbReference>
<dbReference type="PDB" id="5PNV">
    <property type="method" value="X-ray"/>
    <property type="resolution" value="1.60 A"/>
    <property type="chains" value="A=1-342"/>
</dbReference>
<dbReference type="PDB" id="5PNW">
    <property type="method" value="X-ray"/>
    <property type="resolution" value="1.40 A"/>
    <property type="chains" value="A=1-342"/>
</dbReference>
<dbReference type="PDB" id="6ETE">
    <property type="method" value="X-ray"/>
    <property type="resolution" value="1.47 A"/>
    <property type="chains" value="A=1-342"/>
</dbReference>
<dbReference type="PDB" id="6ETG">
    <property type="method" value="X-ray"/>
    <property type="resolution" value="1.28 A"/>
    <property type="chains" value="A=1-342"/>
</dbReference>
<dbReference type="PDB" id="6ETS">
    <property type="method" value="X-ray"/>
    <property type="resolution" value="1.33 A"/>
    <property type="chains" value="A=1-341"/>
</dbReference>
<dbReference type="PDB" id="6ETT">
    <property type="method" value="X-ray"/>
    <property type="resolution" value="1.26 A"/>
    <property type="chains" value="A=1-342"/>
</dbReference>
<dbReference type="PDB" id="6ETU">
    <property type="method" value="X-ray"/>
    <property type="resolution" value="1.33 A"/>
    <property type="chains" value="A=1-342"/>
</dbReference>
<dbReference type="PDB" id="6ETV">
    <property type="method" value="X-ray"/>
    <property type="resolution" value="1.18 A"/>
    <property type="chains" value="A=1-342"/>
</dbReference>
<dbReference type="PDB" id="6ETW">
    <property type="method" value="X-ray"/>
    <property type="resolution" value="1.35 A"/>
    <property type="chains" value="A=1-342"/>
</dbReference>
<dbReference type="PDB" id="6F5Q">
    <property type="method" value="X-ray"/>
    <property type="resolution" value="1.43 A"/>
    <property type="chains" value="A=1-342"/>
</dbReference>
<dbReference type="PDB" id="6F5R">
    <property type="method" value="X-ray"/>
    <property type="resolution" value="1.61 A"/>
    <property type="chains" value="A=11-337"/>
</dbReference>
<dbReference type="PDB" id="6F5S">
    <property type="method" value="X-ray"/>
    <property type="resolution" value="1.48 A"/>
    <property type="chains" value="A=1-342"/>
</dbReference>
<dbReference type="PDB" id="6F5T">
    <property type="method" value="X-ray"/>
    <property type="resolution" value="1.58 A"/>
    <property type="chains" value="A=11-340"/>
</dbReference>
<dbReference type="PDB" id="6H0W">
    <property type="method" value="X-ray"/>
    <property type="resolution" value="1.23 A"/>
    <property type="chains" value="A=1-342"/>
</dbReference>
<dbReference type="PDB" id="6H0X">
    <property type="method" value="X-ray"/>
    <property type="resolution" value="1.64 A"/>
    <property type="chains" value="A=1-342"/>
</dbReference>
<dbReference type="PDB" id="6H0Y">
    <property type="method" value="X-ray"/>
    <property type="resolution" value="1.21 A"/>
    <property type="chains" value="A=1-342"/>
</dbReference>
<dbReference type="PDB" id="6H0Z">
    <property type="method" value="X-ray"/>
    <property type="resolution" value="1.34 A"/>
    <property type="chains" value="A=1-342"/>
</dbReference>
<dbReference type="PDB" id="6H10">
    <property type="method" value="X-ray"/>
    <property type="resolution" value="1.10 A"/>
    <property type="chains" value="A=1-342"/>
</dbReference>
<dbReference type="PDB" id="6H11">
    <property type="method" value="X-ray"/>
    <property type="resolution" value="1.52 A"/>
    <property type="chains" value="A=1-342"/>
</dbReference>
<dbReference type="PDB" id="7DYG">
    <property type="method" value="X-ray"/>
    <property type="resolution" value="2.00 A"/>
    <property type="chains" value="A=11-340"/>
</dbReference>
<dbReference type="PDB" id="7DYQ">
    <property type="method" value="X-ray"/>
    <property type="resolution" value="2.00 A"/>
    <property type="chains" value="A=11-340"/>
</dbReference>
<dbReference type="PDB" id="8WUG">
    <property type="method" value="X-ray"/>
    <property type="resolution" value="1.70 A"/>
    <property type="chains" value="A=1-342"/>
</dbReference>
<dbReference type="PDBsum" id="3DXT"/>
<dbReference type="PDBsum" id="3DXU"/>
<dbReference type="PDBsum" id="4D6Q"/>
<dbReference type="PDBsum" id="4D6R"/>
<dbReference type="PDBsum" id="4D6S"/>
<dbReference type="PDBsum" id="4HON"/>
<dbReference type="PDBsum" id="4HOO"/>
<dbReference type="PDBsum" id="5F5A"/>
<dbReference type="PDBsum" id="5F5C"/>
<dbReference type="PDBsum" id="5FP4"/>
<dbReference type="PDBsum" id="5FP7"/>
<dbReference type="PDBsum" id="5FP8"/>
<dbReference type="PDBsum" id="5FP9"/>
<dbReference type="PDBsum" id="5FPA"/>
<dbReference type="PDBsum" id="5FPB"/>
<dbReference type="PDBsum" id="5PH0"/>
<dbReference type="PDBsum" id="5PH1"/>
<dbReference type="PDBsum" id="5PH2"/>
<dbReference type="PDBsum" id="5PH3"/>
<dbReference type="PDBsum" id="5PH4"/>
<dbReference type="PDBsum" id="5PH5"/>
<dbReference type="PDBsum" id="5PH6"/>
<dbReference type="PDBsum" id="5PH7"/>
<dbReference type="PDBsum" id="5PH8"/>
<dbReference type="PDBsum" id="5PH9"/>
<dbReference type="PDBsum" id="5PHA"/>
<dbReference type="PDBsum" id="5PHB"/>
<dbReference type="PDBsum" id="5PHC"/>
<dbReference type="PDBsum" id="5PHD"/>
<dbReference type="PDBsum" id="5PHE"/>
<dbReference type="PDBsum" id="5PHF"/>
<dbReference type="PDBsum" id="5PHG"/>
<dbReference type="PDBsum" id="5PHH"/>
<dbReference type="PDBsum" id="5PHI"/>
<dbReference type="PDBsum" id="5PHJ"/>
<dbReference type="PDBsum" id="5PHK"/>
<dbReference type="PDBsum" id="5PHL"/>
<dbReference type="PDBsum" id="5PHM"/>
<dbReference type="PDBsum" id="5PHN"/>
<dbReference type="PDBsum" id="5PHO"/>
<dbReference type="PDBsum" id="5PHP"/>
<dbReference type="PDBsum" id="5PHQ"/>
<dbReference type="PDBsum" id="5PHR"/>
<dbReference type="PDBsum" id="5PHS"/>
<dbReference type="PDBsum" id="5PHT"/>
<dbReference type="PDBsum" id="5PHU"/>
<dbReference type="PDBsum" id="5PHV"/>
<dbReference type="PDBsum" id="5PHW"/>
<dbReference type="PDBsum" id="5PHX"/>
<dbReference type="PDBsum" id="5PHY"/>
<dbReference type="PDBsum" id="5PHZ"/>
<dbReference type="PDBsum" id="5PI0"/>
<dbReference type="PDBsum" id="5PI1"/>
<dbReference type="PDBsum" id="5PI2"/>
<dbReference type="PDBsum" id="5PI3"/>
<dbReference type="PDBsum" id="5PI4"/>
<dbReference type="PDBsum" id="5PI5"/>
<dbReference type="PDBsum" id="5PI6"/>
<dbReference type="PDBsum" id="5PI7"/>
<dbReference type="PDBsum" id="5PI8"/>
<dbReference type="PDBsum" id="5PI9"/>
<dbReference type="PDBsum" id="5PIA"/>
<dbReference type="PDBsum" id="5PIB"/>
<dbReference type="PDBsum" id="5PIC"/>
<dbReference type="PDBsum" id="5PID"/>
<dbReference type="PDBsum" id="5PIE"/>
<dbReference type="PDBsum" id="5PIF"/>
<dbReference type="PDBsum" id="5PIG"/>
<dbReference type="PDBsum" id="5PIH"/>
<dbReference type="PDBsum" id="5PII"/>
<dbReference type="PDBsum" id="5PIJ"/>
<dbReference type="PDBsum" id="5PIK"/>
<dbReference type="PDBsum" id="5PIL"/>
<dbReference type="PDBsum" id="5PIM"/>
<dbReference type="PDBsum" id="5PIN"/>
<dbReference type="PDBsum" id="5PIO"/>
<dbReference type="PDBsum" id="5PIP"/>
<dbReference type="PDBsum" id="5PIQ"/>
<dbReference type="PDBsum" id="5PIR"/>
<dbReference type="PDBsum" id="5PIS"/>
<dbReference type="PDBsum" id="5PIT"/>
<dbReference type="PDBsum" id="5PIU"/>
<dbReference type="PDBsum" id="5PIV"/>
<dbReference type="PDBsum" id="5PIW"/>
<dbReference type="PDBsum" id="5PIX"/>
<dbReference type="PDBsum" id="5PIY"/>
<dbReference type="PDBsum" id="5PIZ"/>
<dbReference type="PDBsum" id="5PJ0"/>
<dbReference type="PDBsum" id="5PJ1"/>
<dbReference type="PDBsum" id="5PJ2"/>
<dbReference type="PDBsum" id="5PJ3"/>
<dbReference type="PDBsum" id="5PJ4"/>
<dbReference type="PDBsum" id="5PJ5"/>
<dbReference type="PDBsum" id="5PJ6"/>
<dbReference type="PDBsum" id="5PJ7"/>
<dbReference type="PDBsum" id="5PJ8"/>
<dbReference type="PDBsum" id="5PJ9"/>
<dbReference type="PDBsum" id="5PJA"/>
<dbReference type="PDBsum" id="5PJB"/>
<dbReference type="PDBsum" id="5PJC"/>
<dbReference type="PDBsum" id="5PJD"/>
<dbReference type="PDBsum" id="5PJE"/>
<dbReference type="PDBsum" id="5PJF"/>
<dbReference type="PDBsum" id="5PJG"/>
<dbReference type="PDBsum" id="5PJH"/>
<dbReference type="PDBsum" id="5PJI"/>
<dbReference type="PDBsum" id="5PJJ"/>
<dbReference type="PDBsum" id="5PJK"/>
<dbReference type="PDBsum" id="5PJL"/>
<dbReference type="PDBsum" id="5PJM"/>
<dbReference type="PDBsum" id="5PJN"/>
<dbReference type="PDBsum" id="5PJO"/>
<dbReference type="PDBsum" id="5PJP"/>
<dbReference type="PDBsum" id="5PJQ"/>
<dbReference type="PDBsum" id="5PJR"/>
<dbReference type="PDBsum" id="5PJS"/>
<dbReference type="PDBsum" id="5PJT"/>
<dbReference type="PDBsum" id="5PJU"/>
<dbReference type="PDBsum" id="5PJV"/>
<dbReference type="PDBsum" id="5PJW"/>
<dbReference type="PDBsum" id="5PJX"/>
<dbReference type="PDBsum" id="5PJY"/>
<dbReference type="PDBsum" id="5PJZ"/>
<dbReference type="PDBsum" id="5PK0"/>
<dbReference type="PDBsum" id="5PK1"/>
<dbReference type="PDBsum" id="5PK2"/>
<dbReference type="PDBsum" id="5PK3"/>
<dbReference type="PDBsum" id="5PK4"/>
<dbReference type="PDBsum" id="5PK5"/>
<dbReference type="PDBsum" id="5PK6"/>
<dbReference type="PDBsum" id="5PK7"/>
<dbReference type="PDBsum" id="5PK8"/>
<dbReference type="PDBsum" id="5PK9"/>
<dbReference type="PDBsum" id="5PKA"/>
<dbReference type="PDBsum" id="5PKB"/>
<dbReference type="PDBsum" id="5PKC"/>
<dbReference type="PDBsum" id="5PKD"/>
<dbReference type="PDBsum" id="5PKE"/>
<dbReference type="PDBsum" id="5PKF"/>
<dbReference type="PDBsum" id="5PKG"/>
<dbReference type="PDBsum" id="5PKH"/>
<dbReference type="PDBsum" id="5PKI"/>
<dbReference type="PDBsum" id="5PKJ"/>
<dbReference type="PDBsum" id="5PKK"/>
<dbReference type="PDBsum" id="5PKL"/>
<dbReference type="PDBsum" id="5PKM"/>
<dbReference type="PDBsum" id="5PKN"/>
<dbReference type="PDBsum" id="5PKO"/>
<dbReference type="PDBsum" id="5PKP"/>
<dbReference type="PDBsum" id="5PKQ"/>
<dbReference type="PDBsum" id="5PKR"/>
<dbReference type="PDBsum" id="5PKS"/>
<dbReference type="PDBsum" id="5PKT"/>
<dbReference type="PDBsum" id="5PKU"/>
<dbReference type="PDBsum" id="5PKV"/>
<dbReference type="PDBsum" id="5PKW"/>
<dbReference type="PDBsum" id="5PKX"/>
<dbReference type="PDBsum" id="5PKY"/>
<dbReference type="PDBsum" id="5PKZ"/>
<dbReference type="PDBsum" id="5PL0"/>
<dbReference type="PDBsum" id="5PL1"/>
<dbReference type="PDBsum" id="5PL2"/>
<dbReference type="PDBsum" id="5PL3"/>
<dbReference type="PDBsum" id="5PL4"/>
<dbReference type="PDBsum" id="5PL5"/>
<dbReference type="PDBsum" id="5PL6"/>
<dbReference type="PDBsum" id="5PL7"/>
<dbReference type="PDBsum" id="5PL8"/>
<dbReference type="PDBsum" id="5PL9"/>
<dbReference type="PDBsum" id="5PLA"/>
<dbReference type="PDBsum" id="5PLB"/>
<dbReference type="PDBsum" id="5PLC"/>
<dbReference type="PDBsum" id="5PLD"/>
<dbReference type="PDBsum" id="5PLE"/>
<dbReference type="PDBsum" id="5PLF"/>
<dbReference type="PDBsum" id="5PLG"/>
<dbReference type="PDBsum" id="5PLH"/>
<dbReference type="PDBsum" id="5PLI"/>
<dbReference type="PDBsum" id="5PLJ"/>
<dbReference type="PDBsum" id="5PLK"/>
<dbReference type="PDBsum" id="5PLL"/>
<dbReference type="PDBsum" id="5PLM"/>
<dbReference type="PDBsum" id="5PLN"/>
<dbReference type="PDBsum" id="5PLO"/>
<dbReference type="PDBsum" id="5PLP"/>
<dbReference type="PDBsum" id="5PLQ"/>
<dbReference type="PDBsum" id="5PLR"/>
<dbReference type="PDBsum" id="5PLS"/>
<dbReference type="PDBsum" id="5PLT"/>
<dbReference type="PDBsum" id="5PLU"/>
<dbReference type="PDBsum" id="5PLV"/>
<dbReference type="PDBsum" id="5PLW"/>
<dbReference type="PDBsum" id="5PLX"/>
<dbReference type="PDBsum" id="5PLY"/>
<dbReference type="PDBsum" id="5PLZ"/>
<dbReference type="PDBsum" id="5PM0"/>
<dbReference type="PDBsum" id="5PM1"/>
<dbReference type="PDBsum" id="5PM2"/>
<dbReference type="PDBsum" id="5PM3"/>
<dbReference type="PDBsum" id="5PM4"/>
<dbReference type="PDBsum" id="5PM5"/>
<dbReference type="PDBsum" id="5PM6"/>
<dbReference type="PDBsum" id="5PM7"/>
<dbReference type="PDBsum" id="5PM8"/>
<dbReference type="PDBsum" id="5PM9"/>
<dbReference type="PDBsum" id="5PMA"/>
<dbReference type="PDBsum" id="5PMB"/>
<dbReference type="PDBsum" id="5PMC"/>
<dbReference type="PDBsum" id="5PMD"/>
<dbReference type="PDBsum" id="5PME"/>
<dbReference type="PDBsum" id="5PMF"/>
<dbReference type="PDBsum" id="5PMG"/>
<dbReference type="PDBsum" id="5PMH"/>
<dbReference type="PDBsum" id="5PMI"/>
<dbReference type="PDBsum" id="5PMJ"/>
<dbReference type="PDBsum" id="5PMK"/>
<dbReference type="PDBsum" id="5PML"/>
<dbReference type="PDBsum" id="5PMM"/>
<dbReference type="PDBsum" id="5PMN"/>
<dbReference type="PDBsum" id="5PMO"/>
<dbReference type="PDBsum" id="5PMP"/>
<dbReference type="PDBsum" id="5PMQ"/>
<dbReference type="PDBsum" id="5PMR"/>
<dbReference type="PDBsum" id="5PMS"/>
<dbReference type="PDBsum" id="5PMT"/>
<dbReference type="PDBsum" id="5PMU"/>
<dbReference type="PDBsum" id="5PMV"/>
<dbReference type="PDBsum" id="5PMW"/>
<dbReference type="PDBsum" id="5PMX"/>
<dbReference type="PDBsum" id="5PMY"/>
<dbReference type="PDBsum" id="5PMZ"/>
<dbReference type="PDBsum" id="5PN0"/>
<dbReference type="PDBsum" id="5PN1"/>
<dbReference type="PDBsum" id="5PN2"/>
<dbReference type="PDBsum" id="5PN3"/>
<dbReference type="PDBsum" id="5PN4"/>
<dbReference type="PDBsum" id="5PN5"/>
<dbReference type="PDBsum" id="5PN6"/>
<dbReference type="PDBsum" id="5PN7"/>
<dbReference type="PDBsum" id="5PN8"/>
<dbReference type="PDBsum" id="5PN9"/>
<dbReference type="PDBsum" id="5PNA"/>
<dbReference type="PDBsum" id="5PNB"/>
<dbReference type="PDBsum" id="5PNC"/>
<dbReference type="PDBsum" id="5PND"/>
<dbReference type="PDBsum" id="5PNE"/>
<dbReference type="PDBsum" id="5PNF"/>
<dbReference type="PDBsum" id="5PNG"/>
<dbReference type="PDBsum" id="5PNH"/>
<dbReference type="PDBsum" id="5PNI"/>
<dbReference type="PDBsum" id="5PNJ"/>
<dbReference type="PDBsum" id="5PNK"/>
<dbReference type="PDBsum" id="5PNL"/>
<dbReference type="PDBsum" id="5PNM"/>
<dbReference type="PDBsum" id="5PNN"/>
<dbReference type="PDBsum" id="5PNO"/>
<dbReference type="PDBsum" id="5PNP"/>
<dbReference type="PDBsum" id="5PNQ"/>
<dbReference type="PDBsum" id="5PNR"/>
<dbReference type="PDBsum" id="5PNS"/>
<dbReference type="PDBsum" id="5PNU"/>
<dbReference type="PDBsum" id="5PNV"/>
<dbReference type="PDBsum" id="5PNW"/>
<dbReference type="PDBsum" id="6ETE"/>
<dbReference type="PDBsum" id="6ETG"/>
<dbReference type="PDBsum" id="6ETS"/>
<dbReference type="PDBsum" id="6ETT"/>
<dbReference type="PDBsum" id="6ETU"/>
<dbReference type="PDBsum" id="6ETV"/>
<dbReference type="PDBsum" id="6ETW"/>
<dbReference type="PDBsum" id="6F5Q"/>
<dbReference type="PDBsum" id="6F5R"/>
<dbReference type="PDBsum" id="6F5S"/>
<dbReference type="PDBsum" id="6F5T"/>
<dbReference type="PDBsum" id="6H0W"/>
<dbReference type="PDBsum" id="6H0X"/>
<dbReference type="PDBsum" id="6H0Y"/>
<dbReference type="PDBsum" id="6H0Z"/>
<dbReference type="PDBsum" id="6H10"/>
<dbReference type="PDBsum" id="6H11"/>
<dbReference type="PDBsum" id="7DYG"/>
<dbReference type="PDBsum" id="7DYQ"/>
<dbReference type="PDBsum" id="8WUG"/>
<dbReference type="SMR" id="Q6B0I6"/>
<dbReference type="BioGRID" id="120819">
    <property type="interactions" value="42"/>
</dbReference>
<dbReference type="DIP" id="DIP-29606N"/>
<dbReference type="FunCoup" id="Q6B0I6">
    <property type="interactions" value="197"/>
</dbReference>
<dbReference type="IntAct" id="Q6B0I6">
    <property type="interactions" value="37"/>
</dbReference>
<dbReference type="MINT" id="Q6B0I6"/>
<dbReference type="STRING" id="9606.ENSP00000334181"/>
<dbReference type="BindingDB" id="Q6B0I6"/>
<dbReference type="ChEMBL" id="CHEMBL6138"/>
<dbReference type="GlyGen" id="Q6B0I6">
    <property type="glycosylation" value="3 sites, 1 O-linked glycan (1 site)"/>
</dbReference>
<dbReference type="iPTMnet" id="Q6B0I6"/>
<dbReference type="PhosphoSitePlus" id="Q6B0I6"/>
<dbReference type="BioMuta" id="KDM4D"/>
<dbReference type="DMDM" id="239938885"/>
<dbReference type="jPOST" id="Q6B0I6"/>
<dbReference type="MassIVE" id="Q6B0I6"/>
<dbReference type="PaxDb" id="9606-ENSP00000334181"/>
<dbReference type="PeptideAtlas" id="Q6B0I6"/>
<dbReference type="ProteomicsDB" id="66206"/>
<dbReference type="Pumba" id="Q6B0I6"/>
<dbReference type="ABCD" id="Q6B0I6">
    <property type="antibodies" value="2 sequenced antibodies"/>
</dbReference>
<dbReference type="Antibodypedia" id="17907">
    <property type="antibodies" value="256 antibodies from 32 providers"/>
</dbReference>
<dbReference type="DNASU" id="55693"/>
<dbReference type="Ensembl" id="ENST00000335080.6">
    <property type="protein sequence ID" value="ENSP00000334181.5"/>
    <property type="gene ID" value="ENSG00000186280.7"/>
</dbReference>
<dbReference type="Ensembl" id="ENST00000536741.1">
    <property type="protein sequence ID" value="ENSP00000460897.1"/>
    <property type="gene ID" value="ENSG00000186280.7"/>
</dbReference>
<dbReference type="Ensembl" id="ENST00000610872.1">
    <property type="protein sequence ID" value="ENSP00000482224.1"/>
    <property type="gene ID" value="ENSG00000186280.7"/>
</dbReference>
<dbReference type="GeneID" id="55693"/>
<dbReference type="KEGG" id="hsa:55693"/>
<dbReference type="MANE-Select" id="ENST00000335080.6">
    <property type="protein sequence ID" value="ENSP00000334181.5"/>
    <property type="RefSeq nucleotide sequence ID" value="NM_018039.3"/>
    <property type="RefSeq protein sequence ID" value="NP_060509.2"/>
</dbReference>
<dbReference type="UCSC" id="uc001pfe.4">
    <property type="organism name" value="human"/>
</dbReference>
<dbReference type="AGR" id="HGNC:25498"/>
<dbReference type="CTD" id="55693"/>
<dbReference type="DisGeNET" id="55693"/>
<dbReference type="GeneCards" id="KDM4D"/>
<dbReference type="HGNC" id="HGNC:25498">
    <property type="gene designation" value="KDM4D"/>
</dbReference>
<dbReference type="HPA" id="ENSG00000186280">
    <property type="expression patterns" value="Tissue enriched (testis)"/>
</dbReference>
<dbReference type="MIM" id="609766">
    <property type="type" value="gene"/>
</dbReference>
<dbReference type="neXtProt" id="NX_Q6B0I6"/>
<dbReference type="OpenTargets" id="ENSG00000186280"/>
<dbReference type="PharmGKB" id="PA164721552"/>
<dbReference type="VEuPathDB" id="HostDB:ENSG00000186280"/>
<dbReference type="eggNOG" id="KOG0958">
    <property type="taxonomic scope" value="Eukaryota"/>
</dbReference>
<dbReference type="GeneTree" id="ENSGT00940000162152"/>
<dbReference type="HOGENOM" id="CLU_001442_6_1_1"/>
<dbReference type="InParanoid" id="Q6B0I6"/>
<dbReference type="OMA" id="RASICKC"/>
<dbReference type="OrthoDB" id="9547406at2759"/>
<dbReference type="PAN-GO" id="Q6B0I6">
    <property type="GO annotations" value="3 GO annotations based on evolutionary models"/>
</dbReference>
<dbReference type="PhylomeDB" id="Q6B0I6"/>
<dbReference type="TreeFam" id="TF106449"/>
<dbReference type="BioCyc" id="MetaCyc:MONOMER66-43295"/>
<dbReference type="BRENDA" id="1.14.11.27">
    <property type="organism ID" value="2681"/>
</dbReference>
<dbReference type="BRENDA" id="1.14.11.66">
    <property type="organism ID" value="2681"/>
</dbReference>
<dbReference type="PathwayCommons" id="Q6B0I6"/>
<dbReference type="Reactome" id="R-HSA-3214842">
    <property type="pathway name" value="HDMs demethylate histones"/>
</dbReference>
<dbReference type="SignaLink" id="Q6B0I6"/>
<dbReference type="SIGNOR" id="Q6B0I6"/>
<dbReference type="BioGRID-ORCS" id="55693">
    <property type="hits" value="8 hits in 1157 CRISPR screens"/>
</dbReference>
<dbReference type="ChiTaRS" id="KDM4D">
    <property type="organism name" value="human"/>
</dbReference>
<dbReference type="EvolutionaryTrace" id="Q6B0I6"/>
<dbReference type="GeneWiki" id="JMJD2D"/>
<dbReference type="GenomeRNAi" id="55693"/>
<dbReference type="Pharos" id="Q6B0I6">
    <property type="development level" value="Tchem"/>
</dbReference>
<dbReference type="PRO" id="PR:Q6B0I6"/>
<dbReference type="Proteomes" id="UP000005640">
    <property type="component" value="Chromosome 11"/>
</dbReference>
<dbReference type="RNAct" id="Q6B0I6">
    <property type="molecule type" value="protein"/>
</dbReference>
<dbReference type="Bgee" id="ENSG00000186280">
    <property type="expression patterns" value="Expressed in buccal mucosa cell and 124 other cell types or tissues"/>
</dbReference>
<dbReference type="GO" id="GO:0072562">
    <property type="term" value="C:blood microparticle"/>
    <property type="evidence" value="ECO:0007005"/>
    <property type="project" value="UniProtKB"/>
</dbReference>
<dbReference type="GO" id="GO:0000785">
    <property type="term" value="C:chromatin"/>
    <property type="evidence" value="ECO:0000318"/>
    <property type="project" value="GO_Central"/>
</dbReference>
<dbReference type="GO" id="GO:0005654">
    <property type="term" value="C:nucleoplasm"/>
    <property type="evidence" value="ECO:0000304"/>
    <property type="project" value="Reactome"/>
</dbReference>
<dbReference type="GO" id="GO:0005634">
    <property type="term" value="C:nucleus"/>
    <property type="evidence" value="ECO:0000318"/>
    <property type="project" value="GO_Central"/>
</dbReference>
<dbReference type="GO" id="GO:0005721">
    <property type="term" value="C:pericentric heterochromatin"/>
    <property type="evidence" value="ECO:0007669"/>
    <property type="project" value="Ensembl"/>
</dbReference>
<dbReference type="GO" id="GO:0035861">
    <property type="term" value="C:site of double-strand break"/>
    <property type="evidence" value="ECO:0000314"/>
    <property type="project" value="MGI"/>
</dbReference>
<dbReference type="GO" id="GO:0031490">
    <property type="term" value="F:chromatin DNA binding"/>
    <property type="evidence" value="ECO:0007669"/>
    <property type="project" value="Ensembl"/>
</dbReference>
<dbReference type="GO" id="GO:0003684">
    <property type="term" value="F:damaged DNA binding"/>
    <property type="evidence" value="ECO:0007669"/>
    <property type="project" value="Ensembl"/>
</dbReference>
<dbReference type="GO" id="GO:0032452">
    <property type="term" value="F:histone demethylase activity"/>
    <property type="evidence" value="ECO:0000304"/>
    <property type="project" value="Reactome"/>
</dbReference>
<dbReference type="GO" id="GO:0032454">
    <property type="term" value="F:histone H3K9 demethylase activity"/>
    <property type="evidence" value="ECO:0000314"/>
    <property type="project" value="WormBase"/>
</dbReference>
<dbReference type="GO" id="GO:0140684">
    <property type="term" value="F:histone H3K9me2/H3K9me3 demethylase activity"/>
    <property type="evidence" value="ECO:0000314"/>
    <property type="project" value="UniProtKB"/>
</dbReference>
<dbReference type="GO" id="GO:0046872">
    <property type="term" value="F:metal ion binding"/>
    <property type="evidence" value="ECO:0007669"/>
    <property type="project" value="UniProtKB-KW"/>
</dbReference>
<dbReference type="GO" id="GO:0071479">
    <property type="term" value="P:cellular response to ionizing radiation"/>
    <property type="evidence" value="ECO:0000315"/>
    <property type="project" value="MGI"/>
</dbReference>
<dbReference type="GO" id="GO:0006338">
    <property type="term" value="P:chromatin remodeling"/>
    <property type="evidence" value="ECO:0000318"/>
    <property type="project" value="GO_Central"/>
</dbReference>
<dbReference type="GO" id="GO:0000724">
    <property type="term" value="P:double-strand break repair via homologous recombination"/>
    <property type="evidence" value="ECO:0000315"/>
    <property type="project" value="MGI"/>
</dbReference>
<dbReference type="GO" id="GO:0006954">
    <property type="term" value="P:inflammatory response"/>
    <property type="evidence" value="ECO:0000314"/>
    <property type="project" value="UniProt"/>
</dbReference>
<dbReference type="GO" id="GO:0035563">
    <property type="term" value="P:positive regulation of chromatin binding"/>
    <property type="evidence" value="ECO:0000315"/>
    <property type="project" value="MGI"/>
</dbReference>
<dbReference type="GO" id="GO:2001034">
    <property type="term" value="P:positive regulation of double-strand break repair via nonhomologous end joining"/>
    <property type="evidence" value="ECO:0000315"/>
    <property type="project" value="MGI"/>
</dbReference>
<dbReference type="GO" id="GO:0010468">
    <property type="term" value="P:regulation of gene expression"/>
    <property type="evidence" value="ECO:0000318"/>
    <property type="project" value="GO_Central"/>
</dbReference>
<dbReference type="GO" id="GO:0001932">
    <property type="term" value="P:regulation of protein phosphorylation"/>
    <property type="evidence" value="ECO:0000315"/>
    <property type="project" value="MGI"/>
</dbReference>
<dbReference type="FunFam" id="2.60.120.650:FF:000003">
    <property type="entry name" value="Lysine-specific demethylase 4D"/>
    <property type="match status" value="1"/>
</dbReference>
<dbReference type="Gene3D" id="2.60.120.650">
    <property type="entry name" value="Cupin"/>
    <property type="match status" value="1"/>
</dbReference>
<dbReference type="IDEAL" id="IID00481"/>
<dbReference type="InterPro" id="IPR003347">
    <property type="entry name" value="JmjC_dom"/>
</dbReference>
<dbReference type="InterPro" id="IPR003349">
    <property type="entry name" value="JmjN"/>
</dbReference>
<dbReference type="PANTHER" id="PTHR10694">
    <property type="entry name" value="LYSINE-SPECIFIC DEMETHYLASE"/>
    <property type="match status" value="1"/>
</dbReference>
<dbReference type="PANTHER" id="PTHR10694:SF21">
    <property type="entry name" value="LYSINE-SPECIFIC DEMETHYLASE 4D"/>
    <property type="match status" value="1"/>
</dbReference>
<dbReference type="Pfam" id="PF02373">
    <property type="entry name" value="JmjC"/>
    <property type="match status" value="1"/>
</dbReference>
<dbReference type="Pfam" id="PF02375">
    <property type="entry name" value="JmjN"/>
    <property type="match status" value="1"/>
</dbReference>
<dbReference type="SMART" id="SM00558">
    <property type="entry name" value="JmjC"/>
    <property type="match status" value="1"/>
</dbReference>
<dbReference type="SMART" id="SM00545">
    <property type="entry name" value="JmjN"/>
    <property type="match status" value="1"/>
</dbReference>
<dbReference type="SUPFAM" id="SSF51197">
    <property type="entry name" value="Clavaminate synthase-like"/>
    <property type="match status" value="1"/>
</dbReference>
<dbReference type="PROSITE" id="PS51184">
    <property type="entry name" value="JMJC"/>
    <property type="match status" value="1"/>
</dbReference>
<dbReference type="PROSITE" id="PS51183">
    <property type="entry name" value="JMJN"/>
    <property type="match status" value="1"/>
</dbReference>
<feature type="chain" id="PRO_0000234376" description="Lysine-specific demethylase 4D">
    <location>
        <begin position="1"/>
        <end position="523"/>
    </location>
</feature>
<feature type="domain" description="JmjN" evidence="3">
    <location>
        <begin position="18"/>
        <end position="60"/>
    </location>
</feature>
<feature type="domain" description="JmjC" evidence="4">
    <location>
        <begin position="146"/>
        <end position="312"/>
    </location>
</feature>
<feature type="region of interest" description="Disordered" evidence="5">
    <location>
        <begin position="407"/>
        <end position="523"/>
    </location>
</feature>
<feature type="compositionally biased region" description="Low complexity" evidence="5">
    <location>
        <begin position="428"/>
        <end position="440"/>
    </location>
</feature>
<feature type="compositionally biased region" description="Basic residues" evidence="5">
    <location>
        <begin position="448"/>
        <end position="458"/>
    </location>
</feature>
<feature type="binding site" evidence="2">
    <location>
        <position position="136"/>
    </location>
    <ligand>
        <name>2-oxoglutarate</name>
        <dbReference type="ChEBI" id="CHEBI:16810"/>
    </ligand>
</feature>
<feature type="binding site" evidence="4 12">
    <location>
        <position position="192"/>
    </location>
    <ligand>
        <name>Fe cation</name>
        <dbReference type="ChEBI" id="CHEBI:24875"/>
        <note>catalytic</note>
    </ligand>
</feature>
<feature type="binding site" evidence="4 12">
    <location>
        <position position="194"/>
    </location>
    <ligand>
        <name>Fe cation</name>
        <dbReference type="ChEBI" id="CHEBI:24875"/>
        <note>catalytic</note>
    </ligand>
</feature>
<feature type="binding site" evidence="2">
    <location>
        <position position="202"/>
    </location>
    <ligand>
        <name>2-oxoglutarate</name>
        <dbReference type="ChEBI" id="CHEBI:16810"/>
    </ligand>
</feature>
<feature type="binding site" evidence="2">
    <location>
        <position position="210"/>
    </location>
    <ligand>
        <name>2-oxoglutarate</name>
        <dbReference type="ChEBI" id="CHEBI:16810"/>
    </ligand>
</feature>
<feature type="binding site" evidence="13 14">
    <location>
        <position position="238"/>
    </location>
    <ligand>
        <name>Zn(2+)</name>
        <dbReference type="ChEBI" id="CHEBI:29105"/>
    </ligand>
</feature>
<feature type="binding site" evidence="13 14">
    <location>
        <position position="244"/>
    </location>
    <ligand>
        <name>Zn(2+)</name>
        <dbReference type="ChEBI" id="CHEBI:29105"/>
    </ligand>
</feature>
<feature type="binding site" evidence="2">
    <location>
        <position position="245"/>
    </location>
    <ligand>
        <name>2-oxoglutarate</name>
        <dbReference type="ChEBI" id="CHEBI:16810"/>
    </ligand>
</feature>
<feature type="binding site" evidence="4 12">
    <location>
        <position position="280"/>
    </location>
    <ligand>
        <name>Fe cation</name>
        <dbReference type="ChEBI" id="CHEBI:24875"/>
        <note>catalytic</note>
    </ligand>
</feature>
<feature type="binding site" evidence="13 14">
    <location>
        <position position="310"/>
    </location>
    <ligand>
        <name>Zn(2+)</name>
        <dbReference type="ChEBI" id="CHEBI:29105"/>
    </ligand>
</feature>
<feature type="binding site" evidence="13 14">
    <location>
        <position position="312"/>
    </location>
    <ligand>
        <name>Zn(2+)</name>
        <dbReference type="ChEBI" id="CHEBI:29105"/>
    </ligand>
</feature>
<feature type="modified residue" description="PolyADP-ribosyl glutamic acid" evidence="9">
    <location>
        <position position="26"/>
    </location>
</feature>
<feature type="modified residue" description="PolyADP-ribosyl glutamic acid" evidence="9">
    <location>
        <position position="27"/>
    </location>
</feature>
<feature type="sequence variant" id="VAR_057882" description="In dbSNP:rs35631512.">
    <original>S</original>
    <variation>R</variation>
    <location>
        <position position="355"/>
    </location>
</feature>
<feature type="sequence variant" id="VAR_026225" description="In dbSNP:rs3740853." evidence="6 7">
    <original>R</original>
    <variation>Q</variation>
    <location>
        <position position="408"/>
    </location>
</feature>
<feature type="sequence variant" id="VAR_057883" description="In dbSNP:rs34366036.">
    <original>A</original>
    <variation>S</variation>
    <location>
        <position position="471"/>
    </location>
</feature>
<feature type="sequence conflict" description="In Ref. 4; AAH74739." evidence="11" ref="4">
    <original>H</original>
    <variation>R</variation>
    <location>
        <position position="510"/>
    </location>
</feature>
<feature type="strand" evidence="18">
    <location>
        <begin position="19"/>
        <end position="21"/>
    </location>
</feature>
<feature type="turn" evidence="18">
    <location>
        <begin position="25"/>
        <end position="28"/>
    </location>
</feature>
<feature type="helix" evidence="18">
    <location>
        <begin position="31"/>
        <end position="40"/>
    </location>
</feature>
<feature type="helix" evidence="18">
    <location>
        <begin position="43"/>
        <end position="46"/>
    </location>
</feature>
<feature type="strand" evidence="18">
    <location>
        <begin position="47"/>
        <end position="51"/>
    </location>
</feature>
<feature type="strand" evidence="18">
    <location>
        <begin position="59"/>
        <end position="61"/>
    </location>
</feature>
<feature type="helix" evidence="16">
    <location>
        <begin position="66"/>
        <end position="68"/>
    </location>
</feature>
<feature type="strand" evidence="18">
    <location>
        <begin position="70"/>
        <end position="73"/>
    </location>
</feature>
<feature type="strand" evidence="18">
    <location>
        <begin position="75"/>
        <end position="82"/>
    </location>
</feature>
<feature type="strand" evidence="18">
    <location>
        <begin position="85"/>
        <end position="92"/>
    </location>
</feature>
<feature type="helix" evidence="18">
    <location>
        <begin position="98"/>
        <end position="105"/>
    </location>
</feature>
<feature type="turn" evidence="18">
    <location>
        <begin position="108"/>
        <end position="110"/>
    </location>
</feature>
<feature type="helix" evidence="18">
    <location>
        <begin position="118"/>
        <end position="128"/>
    </location>
</feature>
<feature type="helix" evidence="18">
    <location>
        <begin position="129"/>
        <end position="131"/>
    </location>
</feature>
<feature type="strand" evidence="18">
    <location>
        <begin position="135"/>
        <end position="141"/>
    </location>
</feature>
<feature type="helix" evidence="17">
    <location>
        <begin position="154"/>
        <end position="156"/>
    </location>
</feature>
<feature type="helix" evidence="18">
    <location>
        <begin position="160"/>
        <end position="168"/>
    </location>
</feature>
<feature type="turn" evidence="15">
    <location>
        <begin position="173"/>
        <end position="175"/>
    </location>
</feature>
<feature type="strand" evidence="18">
    <location>
        <begin position="179"/>
        <end position="183"/>
    </location>
</feature>
<feature type="strand" evidence="18">
    <location>
        <begin position="188"/>
        <end position="192"/>
    </location>
</feature>
<feature type="helix" evidence="18">
    <location>
        <begin position="195"/>
        <end position="197"/>
    </location>
</feature>
<feature type="strand" evidence="18">
    <location>
        <begin position="199"/>
        <end position="208"/>
    </location>
</feature>
<feature type="strand" evidence="18">
    <location>
        <begin position="210"/>
        <end position="215"/>
    </location>
</feature>
<feature type="helix" evidence="18">
    <location>
        <begin position="217"/>
        <end position="219"/>
    </location>
</feature>
<feature type="helix" evidence="18">
    <location>
        <begin position="220"/>
        <end position="230"/>
    </location>
</feature>
<feature type="helix" evidence="18">
    <location>
        <begin position="232"/>
        <end position="237"/>
    </location>
</feature>
<feature type="helix" evidence="18">
    <location>
        <begin position="241"/>
        <end position="244"/>
    </location>
</feature>
<feature type="strand" evidence="18">
    <location>
        <begin position="247"/>
        <end position="249"/>
    </location>
</feature>
<feature type="helix" evidence="18">
    <location>
        <begin position="251"/>
        <end position="256"/>
    </location>
</feature>
<feature type="strand" evidence="18">
    <location>
        <begin position="262"/>
        <end position="266"/>
    </location>
</feature>
<feature type="strand" evidence="18">
    <location>
        <begin position="271"/>
        <end position="274"/>
    </location>
</feature>
<feature type="strand" evidence="18">
    <location>
        <begin position="279"/>
        <end position="295"/>
    </location>
</feature>
<feature type="helix" evidence="18">
    <location>
        <begin position="300"/>
        <end position="306"/>
    </location>
</feature>
<feature type="strand" evidence="18">
    <location>
        <begin position="312"/>
        <end position="314"/>
    </location>
</feature>
<feature type="helix" evidence="18">
    <location>
        <begin position="321"/>
        <end position="328"/>
    </location>
</feature>
<feature type="helix" evidence="18">
    <location>
        <begin position="330"/>
        <end position="339"/>
    </location>
</feature>